<keyword id="KW-0002">3D-structure</keyword>
<keyword id="KW-0025">Alternative splicing</keyword>
<keyword id="KW-0963">Cytoplasm</keyword>
<keyword id="KW-0903">Direct protein sequencing</keyword>
<keyword id="KW-0225">Disease variant</keyword>
<keyword id="KW-0991">Intellectual disability</keyword>
<keyword id="KW-0488">Methylation</keyword>
<keyword id="KW-0507">mRNA processing</keyword>
<keyword id="KW-0508">mRNA splicing</keyword>
<keyword id="KW-0539">Nucleus</keyword>
<keyword id="KW-1267">Proteomics identification</keyword>
<keyword id="KW-1185">Reference proteome</keyword>
<keyword id="KW-0677">Repeat</keyword>
<keyword id="KW-0687">Ribonucleoprotein</keyword>
<keyword id="KW-0694">RNA-binding</keyword>
<keyword id="KW-0747">Spliceosome</keyword>
<feature type="chain" id="PRO_0000125517" description="Small nuclear ribonucleoprotein-associated proteins B and B'">
    <location>
        <begin position="1"/>
        <end position="240"/>
    </location>
</feature>
<feature type="domain" description="Sm" evidence="3">
    <location>
        <begin position="4"/>
        <end position="86"/>
    </location>
</feature>
<feature type="repeat">
    <location>
        <begin position="175"/>
        <end position="181"/>
    </location>
</feature>
<feature type="repeat">
    <location>
        <begin position="191"/>
        <end position="196"/>
    </location>
</feature>
<feature type="repeat">
    <location>
        <begin position="216"/>
        <end position="221"/>
    </location>
</feature>
<feature type="repeat">
    <location>
        <begin position="222"/>
        <end position="228"/>
    </location>
</feature>
<feature type="repeat">
    <location>
        <begin position="230"/>
        <end position="236"/>
    </location>
</feature>
<feature type="region of interest" description="Disordered" evidence="4">
    <location>
        <begin position="163"/>
        <end position="240"/>
    </location>
</feature>
<feature type="region of interest" description="Repeat-rich region">
    <location>
        <begin position="175"/>
        <end position="236"/>
    </location>
</feature>
<feature type="compositionally biased region" description="Pro residues" evidence="4">
    <location>
        <begin position="172"/>
        <end position="205"/>
    </location>
</feature>
<feature type="compositionally biased region" description="Pro residues" evidence="4">
    <location>
        <begin position="214"/>
        <end position="240"/>
    </location>
</feature>
<feature type="modified residue" description="Asymmetric dimethylarginine; alternate" evidence="41">
    <location>
        <position position="108"/>
    </location>
</feature>
<feature type="modified residue" description="Dimethylated arginine; in A2780 ovarian carcinoma cell line" evidence="27">
    <location>
        <position position="108"/>
    </location>
</feature>
<feature type="modified residue" description="Omega-N-methylarginine; alternate" evidence="41">
    <location>
        <position position="108"/>
    </location>
</feature>
<feature type="modified residue" description="Asymmetric dimethylarginine; alternate" evidence="41">
    <location>
        <position position="112"/>
    </location>
</feature>
<feature type="modified residue" description="Dimethylated arginine; in A2780 ovarian carcinoma cell line" evidence="27">
    <location>
        <position position="112"/>
    </location>
</feature>
<feature type="modified residue" description="Omega-N-methylarginine; alternate" evidence="41">
    <location>
        <position position="112"/>
    </location>
</feature>
<feature type="modified residue" description="Omega-N-methylarginine" evidence="27">
    <location>
        <position position="147"/>
    </location>
</feature>
<feature type="modified residue" description="Omega-N-methylarginine" evidence="2">
    <location>
        <position position="172"/>
    </location>
</feature>
<feature type="splice variant" id="VSP_012221" description="In isoform SM-B1." evidence="30">
    <original>MR</original>
    <variation>GCEAFFDPWPQSMEVAPQRRGLDSSGPRYHRPVCFLCCCSWSLMGLSGFLT</variation>
    <location>
        <begin position="227"/>
        <end position="228"/>
    </location>
</feature>
<feature type="splice variant" id="VSP_005914" description="In isoform SM-B." evidence="28 29 31">
    <original>PPPPGMRPPRP</original>
    <variation>LL</variation>
    <location>
        <begin position="230"/>
        <end position="240"/>
    </location>
</feature>
<feature type="sequence variant" id="VAR_073380" description="In CCMS; expression of the protein is reduced." evidence="17 18">
    <original>N</original>
    <variation>S</variation>
    <location>
        <position position="55"/>
    </location>
</feature>
<feature type="sequence variant" id="VAR_073381" description="In CCMS." evidence="18">
    <original>N</original>
    <variation>T</variation>
    <location>
        <position position="55"/>
    </location>
</feature>
<feature type="sequence variant" id="VAR_073382" description="In CCMS." evidence="17 18">
    <original>S</original>
    <variation>R</variation>
    <location>
        <position position="56"/>
    </location>
</feature>
<feature type="sequence variant" id="VAR_073383" description="In CCMS." evidence="17">
    <original>S</original>
    <variation>W</variation>
    <location>
        <position position="56"/>
    </location>
</feature>
<feature type="sequence variant" id="VAR_052274" description="In dbSNP:rs11545672.">
    <original>S</original>
    <variation>P</variation>
    <location>
        <position position="79"/>
    </location>
</feature>
<feature type="sequence conflict" description="In Ref. 4; no nucleotide entry." evidence="32" ref="4">
    <original>RG</original>
    <variation>L</variation>
    <location>
        <begin position="172"/>
        <end position="173"/>
    </location>
</feature>
<feature type="sequence conflict" description="In Ref. 4; no nucleotide entry." evidence="32" ref="4">
    <location>
        <position position="201"/>
    </location>
</feature>
<feature type="sequence conflict" description="In Ref. 4; no nucleotide entry." evidence="32" ref="4">
    <original>PP</original>
    <variation>S</variation>
    <location>
        <begin position="217"/>
        <end position="218"/>
    </location>
</feature>
<feature type="helix" evidence="42">
    <location>
        <begin position="10"/>
        <end position="12"/>
    </location>
</feature>
<feature type="strand" evidence="42">
    <location>
        <begin position="15"/>
        <end position="21"/>
    </location>
</feature>
<feature type="strand" evidence="42">
    <location>
        <begin position="26"/>
        <end position="33"/>
    </location>
</feature>
<feature type="strand" evidence="42">
    <location>
        <begin position="40"/>
        <end position="51"/>
    </location>
</feature>
<feature type="strand" evidence="43">
    <location>
        <begin position="54"/>
        <end position="57"/>
    </location>
</feature>
<feature type="strand" evidence="42">
    <location>
        <begin position="61"/>
        <end position="72"/>
    </location>
</feature>
<feature type="helix" evidence="42">
    <location>
        <begin position="74"/>
        <end position="76"/>
    </location>
</feature>
<feature type="strand" evidence="42">
    <location>
        <begin position="77"/>
        <end position="84"/>
    </location>
</feature>
<comment type="function">
    <text evidence="7 9 10 14 15 19 20 21 22 23 24">Plays a role in pre-mRNA splicing as a core component of the spliceosomal U1, U2, U4 and U5 small nuclear ribonucleoproteins (snRNPs), the building blocks of the spliceosome (PubMed:11991638, PubMed:18984161, PubMed:19325628, PubMed:25555158, PubMed:26912367, PubMed:28076346, PubMed:28502770, PubMed:28781166, PubMed:32494006). Component of both the pre-catalytic spliceosome B complex and activated spliceosome C complexes (PubMed:11991638, PubMed:28076346, PubMed:28502770, PubMed:28781166). As a component of the minor spliceosome, involved in the splicing of U12-type introns in pre-mRNAs (PubMed:15146077). As part of the U7 snRNP it is involved in histone pre-mRNA 3'-end processing (PubMed:12975319).</text>
</comment>
<comment type="subunit">
    <text evidence="1 5 6 7 8 9 10 11 12 13 14 15 16 19 20 21 22 23 24 25 26">Core component of the spliceosomal U1, U2, U4 and U5 small nuclear ribonucleoproteins (snRNPs), the building blocks of the spliceosome (PubMed:10025403, PubMed:11991638, PubMed:19325628, PubMed:21516107, PubMed:25555158, PubMed:26912367, PubMed:28076346, PubMed:28502770, PubMed:28781166, PubMed:32494006, PubMed:36797247). Most spliceosomal snRNPs contain a common set of Sm proteins, SNRPB, SNRPD1, SNRPD2, SNRPD3, SNRPE, SNRPF and SNRPG that assemble in a heptameric protein ring on the Sm site of the small nuclear RNA to form the core snRNP (PubMed:10025403, PubMed:19325628, PubMed:21516107, PubMed:25555158, PubMed:26912367, PubMed:28076346, PubMed:28502770, PubMed:28781166). Component of the U1 snRNP (PubMed:19325628, PubMed:25555158). The U1 snRNP is composed of the U1 snRNA and the 7 core Sm proteins SNRPB, SNRPD1, SNRPD2, SNRPD3, SNRPE, SNRPF and SNRPG, and at least three U1 snRNP-specific proteins SNRNP70/U1-70K, SNRPA/U1-A and SNRPC/U1-C (PubMed:19325628, PubMed:25555158). Component of the U4/U6-U5 tri-snRNP complex composed of the U4, U6 and U5 snRNAs and at least PRPF3, PRPF4, PRPF6, PRPF8, PRPF31, SNRNP200, TXNL4A, SNRNP40, SNRPB, SNRPD1, SNRPD2, SNRPD3, SNRPE, SNRPF, SNRPG, DDX23, CD2BP2, PPIH, SNU13, EFTUD2, SART1 and USP39, plus LSM2, LSM3, LSM4, LSM5, LSM6, LSM7 and LSM8 (PubMed:26912367). Component of the U7 snRNP complex, or U7 Sm protein core complex, that is composed of the U7 snRNA and at least LSM10, LSM11, SNRPB, SNRPD3, SNRPE, SNRPF and SNRPG; the complex does not contain SNRPD1 and SNRPD2 (PubMed:11574479, PubMed:12975319). Component of the minor spliceosome, which splices U12-type introns (PubMed:15146077, PubMed:33509932). Part of the SMN-Sm complex that contains SMN1, GEMIN2/SIP1, DDX20/GEMIN3, GEMIN4, GEMIN5, GEMIN6, GEMIN7, GEMIN8, STRAP/UNRIP and the Sm proteins SNRPB, SNRPD1, SNRPD2, SNRPD3, SNRPE, SNRPF and SNRPG; catalyzes core snRNPs assembly (PubMed:12095920, PubMed:16314521, PubMed:18984161). Forms a 6S pICln-Sm complex composed of CLNS1A/pICln, SNRPD1, SNRPD2, SNRPE, SNRPF and SNRPG; ring-like structure where CLNS1A/pICln mimics additional Sm proteins and which is unable to assemble into the core snRNP (PubMed:18984161). Identified in a histone pre-mRNA complex, at least composed of ERI1, LSM11, SLBP, SNRPB, SYNCRIP and YBX1 (By similarity). Interacts with TDRD3 and SNUPN (PubMed:12095920, PubMed:15955813). Interacts with PRMT5; interaction leads to its symmetric arginine dimethylation (By similarity). Interacts with TDRD6; interaction promotes association with PRMT5 (By similarity). Interacts with SMN1; the interaction is direct (PubMed:10500148).</text>
</comment>
<comment type="interaction">
    <interactant intactId="EBI-372458">
        <id>P14678</id>
    </interactant>
    <interactant intactId="EBI-930964">
        <id>P54253</id>
        <label>ATXN1</label>
    </interactant>
    <organismsDiffer>false</organismsDiffer>
    <experiments>3</experiments>
</comment>
<comment type="interaction">
    <interactant intactId="EBI-372458">
        <id>P14678</id>
    </interactant>
    <interactant intactId="EBI-768015">
        <id>O95400</id>
        <label>CD2BP2</label>
    </interactant>
    <organismsDiffer>false</organismsDiffer>
    <experiments>11</experiments>
</comment>
<comment type="interaction">
    <interactant intactId="EBI-372458">
        <id>P14678</id>
    </interactant>
    <interactant intactId="EBI-724693">
        <id>P54105</id>
        <label>CLNS1A</label>
    </interactant>
    <organismsDiffer>false</organismsDiffer>
    <experiments>7</experiments>
</comment>
<comment type="interaction">
    <interactant intactId="EBI-372458">
        <id>P14678</id>
    </interactant>
    <interactant intactId="EBI-945751">
        <id>P38432</id>
        <label>COIL</label>
    </interactant>
    <organismsDiffer>false</organismsDiffer>
    <experiments>2</experiments>
</comment>
<comment type="interaction">
    <interactant intactId="EBI-372458">
        <id>P14678</id>
    </interactant>
    <interactant intactId="EBI-2462271">
        <id>Q15428</id>
        <label>SF3A2</label>
    </interactant>
    <organismsDiffer>false</organismsDiffer>
    <experiments>3</experiments>
</comment>
<comment type="interaction">
    <interactant intactId="EBI-372458">
        <id>P14678</id>
    </interactant>
    <interactant intactId="EBI-372789">
        <id>P62318</id>
        <label>SNRPD3</label>
    </interactant>
    <organismsDiffer>false</organismsDiffer>
    <experiments>8</experiments>
</comment>
<comment type="interaction">
    <interactant intactId="EBI-372458">
        <id>P14678</id>
    </interactant>
    <interactant intactId="EBI-727414">
        <id>Q9Y3F4</id>
        <label>STRAP</label>
    </interactant>
    <organismsDiffer>false</organismsDiffer>
    <experiments>2</experiments>
</comment>
<comment type="interaction">
    <interactant intactId="EBI-372471">
        <id>P14678-1</id>
    </interactant>
    <interactant intactId="EBI-395447">
        <id>Q16637-3</id>
        <label>SMN2</label>
    </interactant>
    <organismsDiffer>false</organismsDiffer>
    <experiments>3</experiments>
</comment>
<comment type="interaction">
    <interactant intactId="EBI-372475">
        <id>P14678-2</id>
    </interactant>
    <interactant intactId="EBI-11745576">
        <id>Q6PJH3</id>
        <label>AKAP9</label>
    </interactant>
    <organismsDiffer>false</organismsDiffer>
    <experiments>3</experiments>
</comment>
<comment type="interaction">
    <interactant intactId="EBI-372475">
        <id>P14678-2</id>
    </interactant>
    <interactant intactId="EBI-2949658">
        <id>O95429</id>
        <label>BAG4</label>
    </interactant>
    <organismsDiffer>false</organismsDiffer>
    <experiments>5</experiments>
</comment>
<comment type="interaction">
    <interactant intactId="EBI-372475">
        <id>P14678-2</id>
    </interactant>
    <interactant intactId="EBI-744695">
        <id>Q8N9N5</id>
        <label>BANP</label>
    </interactant>
    <organismsDiffer>false</organismsDiffer>
    <experiments>3</experiments>
</comment>
<comment type="interaction">
    <interactant intactId="EBI-372475">
        <id>P14678-2</id>
    </interactant>
    <interactant intactId="EBI-11524452">
        <id>Q8N9N5-2</id>
        <label>BANP</label>
    </interactant>
    <organismsDiffer>false</organismsDiffer>
    <experiments>3</experiments>
</comment>
<comment type="interaction">
    <interactant intactId="EBI-372475">
        <id>P14678-2</id>
    </interactant>
    <interactant intactId="EBI-949378">
        <id>Q14457</id>
        <label>BECN1</label>
    </interactant>
    <organismsDiffer>false</organismsDiffer>
    <experiments>3</experiments>
</comment>
<comment type="interaction">
    <interactant intactId="EBI-372475">
        <id>P14678-2</id>
    </interactant>
    <interactant intactId="EBI-12809220">
        <id>Q5SWW7</id>
        <label>C10orf55</label>
    </interactant>
    <organismsDiffer>false</organismsDiffer>
    <experiments>3</experiments>
</comment>
<comment type="interaction">
    <interactant intactId="EBI-372475">
        <id>P14678-2</id>
    </interactant>
    <interactant intactId="EBI-739580">
        <id>Q13137</id>
        <label>CALCOCO2</label>
    </interactant>
    <organismsDiffer>false</organismsDiffer>
    <experiments>3</experiments>
</comment>
<comment type="interaction">
    <interactant intactId="EBI-372475">
        <id>P14678-2</id>
    </interactant>
    <interactant intactId="EBI-768015">
        <id>O95400</id>
        <label>CD2BP2</label>
    </interactant>
    <organismsDiffer>false</organismsDiffer>
    <experiments>10</experiments>
</comment>
<comment type="interaction">
    <interactant intactId="EBI-372475">
        <id>P14678-2</id>
    </interactant>
    <interactant intactId="EBI-747776">
        <id>Q53EZ4</id>
        <label>CEP55</label>
    </interactant>
    <organismsDiffer>false</organismsDiffer>
    <experiments>3</experiments>
</comment>
<comment type="interaction">
    <interactant intactId="EBI-372475">
        <id>P14678-2</id>
    </interactant>
    <interactant intactId="EBI-724693">
        <id>P54105</id>
        <label>CLNS1A</label>
    </interactant>
    <organismsDiffer>false</organismsDiffer>
    <experiments>3</experiments>
</comment>
<comment type="interaction">
    <interactant intactId="EBI-372475">
        <id>P14678-2</id>
    </interactant>
    <interactant intactId="EBI-6269632">
        <id>Q96BR5</id>
        <label>COA7</label>
    </interactant>
    <organismsDiffer>false</organismsDiffer>
    <experiments>3</experiments>
</comment>
<comment type="interaction">
    <interactant intactId="EBI-372475">
        <id>P14678-2</id>
    </interactant>
    <interactant intactId="EBI-3866319">
        <id>Q9Y2V7</id>
        <label>COG6</label>
    </interactant>
    <organismsDiffer>false</organismsDiffer>
    <experiments>3</experiments>
</comment>
<comment type="interaction">
    <interactant intactId="EBI-372475">
        <id>P14678-2</id>
    </interactant>
    <interactant intactId="EBI-12884642">
        <id>Q03060-25</id>
        <label>CREM</label>
    </interactant>
    <organismsDiffer>false</organismsDiffer>
    <experiments>3</experiments>
</comment>
<comment type="interaction">
    <interactant intactId="EBI-372475">
        <id>P14678-2</id>
    </interactant>
    <interactant intactId="EBI-2872414">
        <id>Q8IUI8</id>
        <label>CRLF3</label>
    </interactant>
    <organismsDiffer>false</organismsDiffer>
    <experiments>3</experiments>
</comment>
<comment type="interaction">
    <interactant intactId="EBI-372475">
        <id>P14678-2</id>
    </interactant>
    <interactant intactId="EBI-3867333">
        <id>A8MQ03</id>
        <label>CYSRT1</label>
    </interactant>
    <organismsDiffer>false</organismsDiffer>
    <experiments>3</experiments>
</comment>
<comment type="interaction">
    <interactant intactId="EBI-372475">
        <id>P14678-2</id>
    </interactant>
    <interactant intactId="EBI-7875264">
        <id>O75553</id>
        <label>DAB1</label>
    </interactant>
    <organismsDiffer>false</organismsDiffer>
    <experiments>3</experiments>
</comment>
<comment type="interaction">
    <interactant intactId="EBI-372475">
        <id>P14678-2</id>
    </interactant>
    <interactant intactId="EBI-21529239">
        <id>Q86TI2-2</id>
        <label>DPP9</label>
    </interactant>
    <organismsDiffer>false</organismsDiffer>
    <experiments>3</experiments>
</comment>
<comment type="interaction">
    <interactant intactId="EBI-372475">
        <id>P14678-2</id>
    </interactant>
    <interactant intactId="EBI-371922">
        <id>Q96B26</id>
        <label>EXOSC8</label>
    </interactant>
    <organismsDiffer>false</organismsDiffer>
    <experiments>3</experiments>
</comment>
<comment type="interaction">
    <interactant intactId="EBI-372475">
        <id>P14678-2</id>
    </interactant>
    <interactant intactId="EBI-12193763">
        <id>A1KXE4-2</id>
        <label>FAM168B</label>
    </interactant>
    <organismsDiffer>false</organismsDiffer>
    <experiments>3</experiments>
</comment>
<comment type="interaction">
    <interactant intactId="EBI-372475">
        <id>P14678-2</id>
    </interactant>
    <interactant intactId="EBI-741101">
        <id>Q13643</id>
        <label>FHL3</label>
    </interactant>
    <organismsDiffer>false</organismsDiffer>
    <experiments>3</experiments>
</comment>
<comment type="interaction">
    <interactant intactId="EBI-372475">
        <id>P14678-2</id>
    </interactant>
    <interactant intactId="EBI-12121668">
        <id>Q96AE4-2</id>
        <label>FUBP1</label>
    </interactant>
    <organismsDiffer>false</organismsDiffer>
    <experiments>3</experiments>
</comment>
<comment type="interaction">
    <interactant intactId="EBI-372475">
        <id>P14678-2</id>
    </interactant>
    <interactant intactId="EBI-947774">
        <id>O75420</id>
        <label>GIGYF1</label>
    </interactant>
    <organismsDiffer>false</organismsDiffer>
    <experiments>5</experiments>
</comment>
<comment type="interaction">
    <interactant intactId="EBI-372475">
        <id>P14678-2</id>
    </interactant>
    <interactant intactId="EBI-618309">
        <id>Q08379</id>
        <label>GOLGA2</label>
    </interactant>
    <organismsDiffer>false</organismsDiffer>
    <experiments>3</experiments>
</comment>
<comment type="interaction">
    <interactant intactId="EBI-372475">
        <id>P14678-2</id>
    </interactant>
    <interactant intactId="EBI-351590">
        <id>P31943</id>
        <label>HNRNPH1</label>
    </interactant>
    <organismsDiffer>false</organismsDiffer>
    <experiments>3</experiments>
</comment>
<comment type="interaction">
    <interactant intactId="EBI-372475">
        <id>P14678-2</id>
    </interactant>
    <interactant intactId="EBI-740785">
        <id>P49639</id>
        <label>HOXA1</label>
    </interactant>
    <organismsDiffer>false</organismsDiffer>
    <experiments>3</experiments>
</comment>
<comment type="interaction">
    <interactant intactId="EBI-372475">
        <id>P14678-2</id>
    </interactant>
    <interactant intactId="EBI-6509505">
        <id>Q0VD86</id>
        <label>INCA1</label>
    </interactant>
    <organismsDiffer>false</organismsDiffer>
    <experiments>3</experiments>
</comment>
<comment type="interaction">
    <interactant intactId="EBI-372475">
        <id>P14678-2</id>
    </interactant>
    <interactant intactId="EBI-1047093">
        <id>O76011</id>
        <label>KRT34</label>
    </interactant>
    <organismsDiffer>false</organismsDiffer>
    <experiments>3</experiments>
</comment>
<comment type="interaction">
    <interactant intactId="EBI-372475">
        <id>P14678-2</id>
    </interactant>
    <interactant intactId="EBI-10171697">
        <id>Q6A162</id>
        <label>KRT40</label>
    </interactant>
    <organismsDiffer>false</organismsDiffer>
    <experiments>3</experiments>
</comment>
<comment type="interaction">
    <interactant intactId="EBI-372475">
        <id>P14678-2</id>
    </interactant>
    <interactant intactId="EBI-12811111">
        <id>Q8IUB9</id>
        <label>KRTAP19-1</label>
    </interactant>
    <organismsDiffer>false</organismsDiffer>
    <experiments>3</experiments>
</comment>
<comment type="interaction">
    <interactant intactId="EBI-372475">
        <id>P14678-2</id>
    </interactant>
    <interactant intactId="EBI-12805508">
        <id>Q3LI70</id>
        <label>KRTAP19-6</label>
    </interactant>
    <organismsDiffer>false</organismsDiffer>
    <experiments>3</experiments>
</comment>
<comment type="interaction">
    <interactant intactId="EBI-372475">
        <id>P14678-2</id>
    </interactant>
    <interactant intactId="EBI-12111050">
        <id>Q3LI64</id>
        <label>KRTAP6-1</label>
    </interactant>
    <organismsDiffer>false</organismsDiffer>
    <experiments>3</experiments>
</comment>
<comment type="interaction">
    <interactant intactId="EBI-372475">
        <id>P14678-2</id>
    </interactant>
    <interactant intactId="EBI-11962084">
        <id>Q3LI66</id>
        <label>KRTAP6-2</label>
    </interactant>
    <organismsDiffer>false</organismsDiffer>
    <experiments>3</experiments>
</comment>
<comment type="interaction">
    <interactant intactId="EBI-372475">
        <id>P14678-2</id>
    </interactant>
    <interactant intactId="EBI-22311199">
        <id>Q3LI67</id>
        <label>KRTAP6-3</label>
    </interactant>
    <organismsDiffer>false</organismsDiffer>
    <experiments>3</experiments>
</comment>
<comment type="interaction">
    <interactant intactId="EBI-372475">
        <id>P14678-2</id>
    </interactant>
    <interactant intactId="EBI-2686809">
        <id>Q96JM7</id>
        <label>L3MBTL3</label>
    </interactant>
    <organismsDiffer>false</organismsDiffer>
    <experiments>3</experiments>
</comment>
<comment type="interaction">
    <interactant intactId="EBI-372475">
        <id>P14678-2</id>
    </interactant>
    <interactant intactId="EBI-347416">
        <id>Q9Y333</id>
        <label>LSM2</label>
    </interactant>
    <organismsDiffer>false</organismsDiffer>
    <experiments>6</experiments>
</comment>
<comment type="interaction">
    <interactant intactId="EBI-372475">
        <id>P14678-2</id>
    </interactant>
    <interactant intactId="EBI-12081182">
        <id>Q86UL8-2</id>
        <label>MAGI2</label>
    </interactant>
    <organismsDiffer>false</organismsDiffer>
    <experiments>3</experiments>
</comment>
<comment type="interaction">
    <interactant intactId="EBI-372475">
        <id>P14678-2</id>
    </interactant>
    <interactant intactId="EBI-12516603">
        <id>Q8WWY6</id>
        <label>MBD3L1</label>
    </interactant>
    <organismsDiffer>false</organismsDiffer>
    <experiments>3</experiments>
</comment>
<comment type="interaction">
    <interactant intactId="EBI-372475">
        <id>P14678-2</id>
    </interactant>
    <interactant intactId="EBI-8487781">
        <id>Q8N6F8</id>
        <label>METTL27</label>
    </interactant>
    <organismsDiffer>false</organismsDiffer>
    <experiments>3</experiments>
</comment>
<comment type="interaction">
    <interactant intactId="EBI-372475">
        <id>P14678-2</id>
    </interactant>
    <interactant intactId="EBI-996616">
        <id>P02795</id>
        <label>MT2A</label>
    </interactant>
    <organismsDiffer>false</organismsDiffer>
    <experiments>3</experiments>
</comment>
<comment type="interaction">
    <interactant intactId="EBI-372475">
        <id>P14678-2</id>
    </interactant>
    <interactant intactId="EBI-536879">
        <id>O43482</id>
        <label>OIP5</label>
    </interactant>
    <organismsDiffer>false</organismsDiffer>
    <experiments>3</experiments>
</comment>
<comment type="interaction">
    <interactant intactId="EBI-372475">
        <id>P14678-2</id>
    </interactant>
    <interactant intactId="EBI-18583589">
        <id>A6NGQ2</id>
        <label>OOEP</label>
    </interactant>
    <organismsDiffer>false</organismsDiffer>
    <experiments>3</experiments>
</comment>
<comment type="interaction">
    <interactant intactId="EBI-372475">
        <id>P14678-2</id>
    </interactant>
    <interactant intactId="EBI-357275">
        <id>Q99471</id>
        <label>PFDN5</label>
    </interactant>
    <organismsDiffer>false</organismsDiffer>
    <experiments>3</experiments>
</comment>
<comment type="interaction">
    <interactant intactId="EBI-372475">
        <id>P14678-2</id>
    </interactant>
    <interactant intactId="EBI-373552">
        <id>Q96CS7</id>
        <label>PLEKHB2</label>
    </interactant>
    <organismsDiffer>false</organismsDiffer>
    <experiments>3</experiments>
</comment>
<comment type="interaction">
    <interactant intactId="EBI-372475">
        <id>P14678-2</id>
    </interactant>
    <interactant intactId="EBI-302345">
        <id>Q8ND90</id>
        <label>PNMA1</label>
    </interactant>
    <organismsDiffer>false</organismsDiffer>
    <experiments>6</experiments>
</comment>
<comment type="interaction">
    <interactant intactId="EBI-372475">
        <id>P14678-2</id>
    </interactant>
    <interactant intactId="EBI-12754095">
        <id>P86480</id>
        <label>PRR20D</label>
    </interactant>
    <organismsDiffer>false</organismsDiffer>
    <experiments>3</experiments>
</comment>
<comment type="interaction">
    <interactant intactId="EBI-372475">
        <id>P14678-2</id>
    </interactant>
    <interactant intactId="EBI-348380">
        <id>P25788</id>
        <label>PSMA3</label>
    </interactant>
    <organismsDiffer>false</organismsDiffer>
    <experiments>3</experiments>
</comment>
<comment type="interaction">
    <interactant intactId="EBI-372475">
        <id>P14678-2</id>
    </interactant>
    <interactant intactId="EBI-740322">
        <id>Q93062</id>
        <label>RBPMS</label>
    </interactant>
    <organismsDiffer>false</organismsDiffer>
    <experiments>3</experiments>
</comment>
<comment type="interaction">
    <interactant intactId="EBI-372475">
        <id>P14678-2</id>
    </interactant>
    <interactant intactId="EBI-746118">
        <id>Q8HWS3</id>
        <label>RFX6</label>
    </interactant>
    <organismsDiffer>false</organismsDiffer>
    <experiments>6</experiments>
</comment>
<comment type="interaction">
    <interactant intactId="EBI-372475">
        <id>P14678-2</id>
    </interactant>
    <interactant intactId="EBI-748621">
        <id>Q9UJW9</id>
        <label>SERTAD3</label>
    </interactant>
    <organismsDiffer>false</organismsDiffer>
    <experiments>4</experiments>
</comment>
<comment type="interaction">
    <interactant intactId="EBI-372475">
        <id>P14678-2</id>
    </interactant>
    <interactant intactId="EBI-348158">
        <id>Q02447</id>
        <label>SP3</label>
    </interactant>
    <organismsDiffer>false</organismsDiffer>
    <experiments>3</experiments>
</comment>
<comment type="interaction">
    <interactant intactId="EBI-372475">
        <id>P14678-2</id>
    </interactant>
    <interactant intactId="EBI-11959123">
        <id>Q99932-2</id>
        <label>SPAG8</label>
    </interactant>
    <organismsDiffer>false</organismsDiffer>
    <experiments>3</experiments>
</comment>
<comment type="interaction">
    <interactant intactId="EBI-372475">
        <id>P14678-2</id>
    </interactant>
    <interactant intactId="EBI-744674">
        <id>O75177</id>
        <label>SS18L1</label>
    </interactant>
    <organismsDiffer>false</organismsDiffer>
    <experiments>3</experiments>
</comment>
<comment type="interaction">
    <interactant intactId="EBI-372475">
        <id>P14678-2</id>
    </interactant>
    <interactant intactId="EBI-1105213">
        <id>Q9UBB9</id>
        <label>TFIP11</label>
    </interactant>
    <organismsDiffer>false</organismsDiffer>
    <experiments>6</experiments>
</comment>
<comment type="interaction">
    <interactant intactId="EBI-372475">
        <id>P14678-2</id>
    </interactant>
    <interactant intactId="EBI-17438286">
        <id>Q8WTV1</id>
        <label>THAP3</label>
    </interactant>
    <organismsDiffer>false</organismsDiffer>
    <experiments>3</experiments>
</comment>
<comment type="interaction">
    <interactant intactId="EBI-372475">
        <id>P14678-2</id>
    </interactant>
    <interactant intactId="EBI-3650647">
        <id>Q9BUZ4</id>
        <label>TRAF4</label>
    </interactant>
    <organismsDiffer>false</organismsDiffer>
    <experiments>3</experiments>
</comment>
<comment type="interaction">
    <interactant intactId="EBI-372475">
        <id>P14678-2</id>
    </interactant>
    <interactant intactId="EBI-740098">
        <id>P36406</id>
        <label>TRIM23</label>
    </interactant>
    <organismsDiffer>false</organismsDiffer>
    <experiments>3</experiments>
</comment>
<comment type="interaction">
    <interactant intactId="EBI-372475">
        <id>P14678-2</id>
    </interactant>
    <interactant intactId="EBI-947187">
        <id>Q9UHD9</id>
        <label>UBQLN2</label>
    </interactant>
    <organismsDiffer>false</organismsDiffer>
    <experiments>3</experiments>
</comment>
<comment type="interaction">
    <interactant intactId="EBI-372475">
        <id>P14678-2</id>
    </interactant>
    <interactant intactId="EBI-11524408">
        <id>Q5T124-6</id>
        <label>UBXN11</label>
    </interactant>
    <organismsDiffer>false</organismsDiffer>
    <experiments>3</experiments>
</comment>
<comment type="interaction">
    <interactant intactId="EBI-372475">
        <id>P14678-2</id>
    </interactant>
    <interactant intactId="EBI-11975223">
        <id>Q70EL1-9</id>
        <label>USP54</label>
    </interactant>
    <organismsDiffer>false</organismsDiffer>
    <experiments>3</experiments>
</comment>
<comment type="interaction">
    <interactant intactId="EBI-372475">
        <id>P14678-2</id>
    </interactant>
    <interactant intactId="EBI-743923">
        <id>O00308</id>
        <label>WWP2</label>
    </interactant>
    <organismsDiffer>false</organismsDiffer>
    <experiments>3</experiments>
</comment>
<comment type="interaction">
    <interactant intactId="EBI-372475">
        <id>P14678-2</id>
    </interactant>
    <interactant intactId="EBI-2849334">
        <id>P52747</id>
        <label>ZNF143</label>
    </interactant>
    <organismsDiffer>false</organismsDiffer>
    <experiments>3</experiments>
</comment>
<comment type="subcellular location">
    <subcellularLocation>
        <location evidence="14">Cytoplasm</location>
        <location evidence="14">Cytosol</location>
    </subcellularLocation>
    <subcellularLocation>
        <location evidence="6 7 20 21 22 23">Nucleus</location>
    </subcellularLocation>
    <text evidence="32">SMN-mediated assembly into core snRNPs occurs in the cytosol before SMN-mediated transport to the nucleus to be included in spliceosomes.</text>
</comment>
<comment type="alternative products">
    <event type="alternative splicing"/>
    <isoform>
        <id>P14678-1</id>
        <name>SM-B'</name>
        <sequence type="displayed"/>
    </isoform>
    <isoform>
        <id>P14678-2</id>
        <name>SM-B</name>
        <sequence type="described" ref="VSP_005914"/>
    </isoform>
    <isoform>
        <id>P14678-3</id>
        <name>SM-B1</name>
        <sequence type="described" ref="VSP_012221"/>
    </isoform>
</comment>
<comment type="PTM">
    <text evidence="1 12 27">Methylated by PRMT5 (By similarity). Arg-108 and Arg-112 are dimethylated, probably to asymmetric dimethylarginine (PubMed:16087681, Ref.10).</text>
</comment>
<comment type="disease" evidence="17 18">
    <disease id="DI-04367">
        <name>Cerebrocostomandibular syndrome</name>
        <acronym>CCMS</acronym>
        <description>A syndrome characterized by severe micrognathia, rib defects ranging from a few dorsal rib segments to complete absence of ossification, and intellectual disability.</description>
        <dbReference type="MIM" id="117650"/>
    </disease>
    <text>The disease is caused by variants affecting the gene represented in this entry.</text>
</comment>
<comment type="miscellaneous">
    <text>Patients with the autoimmune disease systemic lupus erythematosus (SLE) have autoantibodies directed against some of the individual snRNP polypeptides. The most common autoantigen is called Sm. B/b' bear Sm epitopes.</text>
</comment>
<comment type="similarity">
    <text evidence="32">Belongs to the snRNP SmB/SmN family.</text>
</comment>
<comment type="sequence caution" evidence="32">
    <conflict type="erroneous gene model prediction">
        <sequence resource="EMBL-CDS" id="AAD54488"/>
    </conflict>
</comment>
<protein>
    <recommendedName>
        <fullName>Small nuclear ribonucleoprotein-associated proteins B and B'</fullName>
        <shortName>snRNP-B</shortName>
    </recommendedName>
    <alternativeName>
        <fullName>Sm protein B/B'</fullName>
        <shortName>Sm-B/B'</shortName>
        <shortName>SmB/B'</shortName>
    </alternativeName>
</protein>
<proteinExistence type="evidence at protein level"/>
<accession>P14678</accession>
<accession>Q15490</accession>
<accession>Q6IB35</accession>
<accession>Q9UIS5</accession>
<evidence type="ECO:0000250" key="1">
    <source>
        <dbReference type="UniProtKB" id="P27048"/>
    </source>
</evidence>
<evidence type="ECO:0000250" key="2">
    <source>
        <dbReference type="UniProtKB" id="P63162"/>
    </source>
</evidence>
<evidence type="ECO:0000255" key="3">
    <source>
        <dbReference type="PROSITE-ProRule" id="PRU01346"/>
    </source>
</evidence>
<evidence type="ECO:0000256" key="4">
    <source>
        <dbReference type="SAM" id="MobiDB-lite"/>
    </source>
</evidence>
<evidence type="ECO:0000269" key="5">
    <source>
    </source>
</evidence>
<evidence type="ECO:0000269" key="6">
    <source>
    </source>
</evidence>
<evidence type="ECO:0000269" key="7">
    <source>
    </source>
</evidence>
<evidence type="ECO:0000269" key="8">
    <source>
    </source>
</evidence>
<evidence type="ECO:0000269" key="9">
    <source>
    </source>
</evidence>
<evidence type="ECO:0000269" key="10">
    <source>
    </source>
</evidence>
<evidence type="ECO:0000269" key="11">
    <source>
    </source>
</evidence>
<evidence type="ECO:0000269" key="12">
    <source>
    </source>
</evidence>
<evidence type="ECO:0000269" key="13">
    <source>
    </source>
</evidence>
<evidence type="ECO:0000269" key="14">
    <source>
    </source>
</evidence>
<evidence type="ECO:0000269" key="15">
    <source>
    </source>
</evidence>
<evidence type="ECO:0000269" key="16">
    <source>
    </source>
</evidence>
<evidence type="ECO:0000269" key="17">
    <source>
    </source>
</evidence>
<evidence type="ECO:0000269" key="18">
    <source>
    </source>
</evidence>
<evidence type="ECO:0000269" key="19">
    <source>
    </source>
</evidence>
<evidence type="ECO:0000269" key="20">
    <source>
    </source>
</evidence>
<evidence type="ECO:0000269" key="21">
    <source>
    </source>
</evidence>
<evidence type="ECO:0000269" key="22">
    <source>
    </source>
</evidence>
<evidence type="ECO:0000269" key="23">
    <source>
    </source>
</evidence>
<evidence type="ECO:0000269" key="24">
    <source>
    </source>
</evidence>
<evidence type="ECO:0000269" key="25">
    <source>
    </source>
</evidence>
<evidence type="ECO:0000269" key="26">
    <source>
    </source>
</evidence>
<evidence type="ECO:0000269" key="27">
    <source ref="10"/>
</evidence>
<evidence type="ECO:0000303" key="28">
    <source>
    </source>
</evidence>
<evidence type="ECO:0000303" key="29">
    <source>
    </source>
</evidence>
<evidence type="ECO:0000303" key="30">
    <source>
    </source>
</evidence>
<evidence type="ECO:0000303" key="31">
    <source>
    </source>
</evidence>
<evidence type="ECO:0000305" key="32"/>
<evidence type="ECO:0007744" key="33">
    <source>
        <dbReference type="PDB" id="3JCR"/>
    </source>
</evidence>
<evidence type="ECO:0007744" key="34">
    <source>
        <dbReference type="PDB" id="4PJO"/>
    </source>
</evidence>
<evidence type="ECO:0007744" key="35">
    <source>
        <dbReference type="PDB" id="5MQF"/>
    </source>
</evidence>
<evidence type="ECO:0007744" key="36">
    <source>
        <dbReference type="PDB" id="5O9Z"/>
    </source>
</evidence>
<evidence type="ECO:0007744" key="37">
    <source>
        <dbReference type="PDB" id="5XJC"/>
    </source>
</evidence>
<evidence type="ECO:0007744" key="38">
    <source>
        <dbReference type="PDB" id="6Y5Q"/>
    </source>
</evidence>
<evidence type="ECO:0007744" key="39">
    <source>
        <dbReference type="PDB" id="7DVQ"/>
    </source>
</evidence>
<evidence type="ECO:0007744" key="40">
    <source>
        <dbReference type="PDB" id="8HK1"/>
    </source>
</evidence>
<evidence type="ECO:0007744" key="41">
    <source>
    </source>
</evidence>
<evidence type="ECO:0007829" key="42">
    <source>
        <dbReference type="PDB" id="1D3B"/>
    </source>
</evidence>
<evidence type="ECO:0007829" key="43">
    <source>
        <dbReference type="PDB" id="7VPX"/>
    </source>
</evidence>
<name>RSMB_HUMAN</name>
<sequence length="240" mass="24610">MTVGKSSKMLQHIDYRMRCILQDGRIFIGTFKAFDKHMNLILCDCDEFRKIKPKNSKQAEREEKRVLGLVLLRGENLVSMTVEGPPPKDTGIARVPLAGAAGGPGIGRAAGRGIPAGVPMPQAPAGLAGPVRGVGGPSQQVMTPQGRGTVAAAAAAATASIAGAPTQYPPGRGGPPPPMGRGAPPPGMMGPPPGMRPPMGPPMGIPPGRGTPMGMPPPGMRPPPPGMRGPPPPGMRPPRP</sequence>
<gene>
    <name type="primary">SNRPB</name>
    <name type="synonym">COD</name>
    <name type="synonym">SNRPB1</name>
</gene>
<dbReference type="EMBL" id="X17567">
    <property type="protein sequence ID" value="CAB57867.1"/>
    <property type="molecule type" value="mRNA"/>
</dbReference>
<dbReference type="EMBL" id="X17568">
    <property type="protein sequence ID" value="CAB57868.1"/>
    <property type="molecule type" value="mRNA"/>
</dbReference>
<dbReference type="EMBL" id="X15893">
    <property type="protein sequence ID" value="CAA33902.1"/>
    <property type="molecule type" value="mRNA"/>
</dbReference>
<dbReference type="EMBL" id="AF134825">
    <property type="protein sequence ID" value="AAD54488.1"/>
    <property type="status" value="ALT_SEQ"/>
    <property type="molecule type" value="Genomic_DNA"/>
</dbReference>
<dbReference type="EMBL" id="AF134822">
    <property type="protein sequence ID" value="AAD54488.1"/>
    <property type="status" value="JOINED"/>
    <property type="molecule type" value="Genomic_DNA"/>
</dbReference>
<dbReference type="EMBL" id="AF134823">
    <property type="protein sequence ID" value="AAD54488.1"/>
    <property type="status" value="JOINED"/>
    <property type="molecule type" value="Genomic_DNA"/>
</dbReference>
<dbReference type="EMBL" id="AF134824">
    <property type="protein sequence ID" value="AAD54488.1"/>
    <property type="status" value="JOINED"/>
    <property type="molecule type" value="Genomic_DNA"/>
</dbReference>
<dbReference type="EMBL" id="AL049650">
    <property type="protein sequence ID" value="CAB46715.1"/>
    <property type="molecule type" value="Genomic_DNA"/>
</dbReference>
<dbReference type="EMBL" id="CH471133">
    <property type="protein sequence ID" value="EAX10596.1"/>
    <property type="molecule type" value="Genomic_DNA"/>
</dbReference>
<dbReference type="EMBL" id="CR456969">
    <property type="protein sequence ID" value="CAG33250.1"/>
    <property type="molecule type" value="mRNA"/>
</dbReference>
<dbReference type="EMBL" id="AL049650">
    <property type="protein sequence ID" value="CAB46714.1"/>
    <property type="molecule type" value="Genomic_DNA"/>
</dbReference>
<dbReference type="EMBL" id="M34081">
    <property type="protein sequence ID" value="AAA36578.1"/>
    <property type="molecule type" value="mRNA"/>
</dbReference>
<dbReference type="EMBL" id="M34082">
    <property type="protein sequence ID" value="AAA36579.1"/>
    <property type="molecule type" value="mRNA"/>
</dbReference>
<dbReference type="EMBL" id="X52979">
    <property type="protein sequence ID" value="CAA37170.1"/>
    <property type="molecule type" value="Genomic_DNA"/>
</dbReference>
<dbReference type="EMBL" id="X52979">
    <property type="protein sequence ID" value="CAA37171.1"/>
    <property type="molecule type" value="Genomic_DNA"/>
</dbReference>
<dbReference type="CCDS" id="CCDS13026.1">
    <molecule id="P14678-1"/>
</dbReference>
<dbReference type="CCDS" id="CCDS13027.1">
    <molecule id="P14678-2"/>
</dbReference>
<dbReference type="PIR" id="S09377">
    <property type="entry name" value="S09377"/>
</dbReference>
<dbReference type="RefSeq" id="NP_003082.1">
    <molecule id="P14678-2"/>
    <property type="nucleotide sequence ID" value="NM_003091.4"/>
</dbReference>
<dbReference type="RefSeq" id="NP_937859.1">
    <molecule id="P14678-1"/>
    <property type="nucleotide sequence ID" value="NM_198216.2"/>
</dbReference>
<dbReference type="PDB" id="1D3B">
    <property type="method" value="X-ray"/>
    <property type="resolution" value="2.00 A"/>
    <property type="chains" value="B/D/F/H/J/L=1-91"/>
</dbReference>
<dbReference type="PDB" id="3CW1">
    <property type="method" value="X-ray"/>
    <property type="resolution" value="5.49 A"/>
    <property type="chains" value="A/H/I/J=1-174"/>
</dbReference>
<dbReference type="PDB" id="3JCR">
    <property type="method" value="EM"/>
    <property type="resolution" value="7.00 A"/>
    <property type="chains" value="O/o=1-240"/>
</dbReference>
<dbReference type="PDB" id="3PGW">
    <property type="method" value="X-ray"/>
    <property type="resolution" value="4.40 A"/>
    <property type="chains" value="B/Q=1-229"/>
</dbReference>
<dbReference type="PDB" id="4PJO">
    <property type="method" value="X-ray"/>
    <property type="resolution" value="3.30 A"/>
    <property type="chains" value="B/P/b/p=1-95"/>
</dbReference>
<dbReference type="PDB" id="4WZJ">
    <property type="method" value="X-ray"/>
    <property type="resolution" value="3.60 A"/>
    <property type="chains" value="AA/AH/AO/BA/BH/BO/CA/CH/CO/DA/DH/DO=1-95"/>
</dbReference>
<dbReference type="PDB" id="5MQF">
    <property type="method" value="EM"/>
    <property type="resolution" value="5.90 A"/>
    <property type="chains" value="f/m=1-240"/>
</dbReference>
<dbReference type="PDB" id="5O9Z">
    <property type="method" value="EM"/>
    <property type="resolution" value="4.50 A"/>
    <property type="chains" value="X/f/m=1-240"/>
</dbReference>
<dbReference type="PDB" id="5XJC">
    <property type="method" value="EM"/>
    <property type="resolution" value="3.60 A"/>
    <property type="chains" value="b/i=1-229"/>
</dbReference>
<dbReference type="PDB" id="5YZG">
    <property type="method" value="EM"/>
    <property type="resolution" value="4.10 A"/>
    <property type="chains" value="b/i=1-229"/>
</dbReference>
<dbReference type="PDB" id="5Z56">
    <property type="method" value="EM"/>
    <property type="resolution" value="5.10 A"/>
    <property type="chains" value="b/i=1-229"/>
</dbReference>
<dbReference type="PDB" id="5Z57">
    <property type="method" value="EM"/>
    <property type="resolution" value="6.50 A"/>
    <property type="chains" value="b/i=1-229"/>
</dbReference>
<dbReference type="PDB" id="5Z58">
    <property type="method" value="EM"/>
    <property type="resolution" value="4.90 A"/>
    <property type="chains" value="b/i=1-229"/>
</dbReference>
<dbReference type="PDB" id="6AH0">
    <property type="method" value="EM"/>
    <property type="resolution" value="5.70 A"/>
    <property type="chains" value="U/f/i=1-229"/>
</dbReference>
<dbReference type="PDB" id="6FF7">
    <property type="method" value="EM"/>
    <property type="resolution" value="4.50 A"/>
    <property type="chains" value="f/m=1-240"/>
</dbReference>
<dbReference type="PDB" id="6ICZ">
    <property type="method" value="EM"/>
    <property type="resolution" value="3.00 A"/>
    <property type="chains" value="b/i=1-229"/>
</dbReference>
<dbReference type="PDB" id="6ID0">
    <property type="method" value="EM"/>
    <property type="resolution" value="2.90 A"/>
    <property type="chains" value="b/i=1-229"/>
</dbReference>
<dbReference type="PDB" id="6ID1">
    <property type="method" value="EM"/>
    <property type="resolution" value="2.86 A"/>
    <property type="chains" value="b/i=1-229"/>
</dbReference>
<dbReference type="PDB" id="6QDV">
    <property type="method" value="EM"/>
    <property type="resolution" value="3.30 A"/>
    <property type="chains" value="b/k=6-87"/>
</dbReference>
<dbReference type="PDB" id="6QW6">
    <property type="method" value="EM"/>
    <property type="resolution" value="2.92 A"/>
    <property type="chains" value="4b/5b=1-240"/>
</dbReference>
<dbReference type="PDB" id="6QX9">
    <property type="method" value="EM"/>
    <property type="resolution" value="3.28 A"/>
    <property type="chains" value="1b/2b/4b/5b=1-240"/>
</dbReference>
<dbReference type="PDB" id="6V4X">
    <property type="method" value="EM"/>
    <property type="resolution" value="3.20 A"/>
    <property type="chains" value="B=1-95"/>
</dbReference>
<dbReference type="PDB" id="6Y53">
    <property type="method" value="EM"/>
    <property type="resolution" value="7.10 A"/>
    <property type="chains" value="m=1-240"/>
</dbReference>
<dbReference type="PDB" id="6Y5Q">
    <property type="method" value="EM"/>
    <property type="resolution" value="7.10 A"/>
    <property type="chains" value="m=1-240"/>
</dbReference>
<dbReference type="PDB" id="7A5P">
    <property type="method" value="EM"/>
    <property type="resolution" value="5.00 A"/>
    <property type="chains" value="b/m=1-240"/>
</dbReference>
<dbReference type="PDB" id="7ABG">
    <property type="method" value="EM"/>
    <property type="resolution" value="7.80 A"/>
    <property type="chains" value="f/m=1-240"/>
</dbReference>
<dbReference type="PDB" id="7ABI">
    <property type="method" value="EM"/>
    <property type="resolution" value="8.00 A"/>
    <property type="chains" value="f/m=1-240"/>
</dbReference>
<dbReference type="PDB" id="7DVQ">
    <property type="method" value="EM"/>
    <property type="resolution" value="2.89 A"/>
    <property type="chains" value="b/i=1-240"/>
</dbReference>
<dbReference type="PDB" id="7EVO">
    <property type="method" value="EM"/>
    <property type="resolution" value="2.50 A"/>
    <property type="chains" value="f=1-240"/>
</dbReference>
<dbReference type="PDB" id="7QTT">
    <property type="method" value="EM"/>
    <property type="resolution" value="3.10 A"/>
    <property type="chains" value="n=1-240"/>
</dbReference>
<dbReference type="PDB" id="7VPX">
    <property type="method" value="EM"/>
    <property type="resolution" value="3.00 A"/>
    <property type="chains" value="f/k=1-240"/>
</dbReference>
<dbReference type="PDB" id="7W59">
    <property type="method" value="EM"/>
    <property type="resolution" value="3.60 A"/>
    <property type="chains" value="b/i=1-240"/>
</dbReference>
<dbReference type="PDB" id="7W5A">
    <property type="method" value="EM"/>
    <property type="resolution" value="3.60 A"/>
    <property type="chains" value="b/i=1-240"/>
</dbReference>
<dbReference type="PDB" id="7W5B">
    <property type="method" value="EM"/>
    <property type="resolution" value="4.30 A"/>
    <property type="chains" value="b/i=1-240"/>
</dbReference>
<dbReference type="PDB" id="8C6J">
    <property type="method" value="EM"/>
    <property type="resolution" value="2.80 A"/>
    <property type="chains" value="b/k=1-240"/>
</dbReference>
<dbReference type="PDB" id="8CH6">
    <property type="method" value="EM"/>
    <property type="resolution" value="5.90 A"/>
    <property type="chains" value="8/n=1-240"/>
</dbReference>
<dbReference type="PDB" id="8H6E">
    <property type="method" value="EM"/>
    <property type="resolution" value="3.20 A"/>
    <property type="chains" value="2a/4a/5a=1-229"/>
</dbReference>
<dbReference type="PDB" id="8H6J">
    <property type="method" value="EM"/>
    <property type="resolution" value="3.25 A"/>
    <property type="chains" value="2a/4a/5a=1-229"/>
</dbReference>
<dbReference type="PDB" id="8H6K">
    <property type="method" value="EM"/>
    <property type="resolution" value="2.70 A"/>
    <property type="chains" value="2a/4a/5a=1-229"/>
</dbReference>
<dbReference type="PDB" id="8H6L">
    <property type="method" value="EM"/>
    <property type="resolution" value="2.60 A"/>
    <property type="chains" value="2a/4a/5a=1-229"/>
</dbReference>
<dbReference type="PDB" id="8HK1">
    <property type="method" value="EM"/>
    <property type="resolution" value="2.70 A"/>
    <property type="chains" value="f=1-240"/>
</dbReference>
<dbReference type="PDB" id="8I0P">
    <property type="method" value="EM"/>
    <property type="resolution" value="3.40 A"/>
    <property type="chains" value="a/m=1-240"/>
</dbReference>
<dbReference type="PDB" id="8I0R">
    <property type="method" value="EM"/>
    <property type="resolution" value="3.00 A"/>
    <property type="chains" value="a/m=1-240"/>
</dbReference>
<dbReference type="PDB" id="8I0S">
    <property type="method" value="EM"/>
    <property type="resolution" value="4.20 A"/>
    <property type="chains" value="a/m=1-240"/>
</dbReference>
<dbReference type="PDB" id="8I0T">
    <property type="method" value="EM"/>
    <property type="resolution" value="3.00 A"/>
    <property type="chains" value="a/m=1-240"/>
</dbReference>
<dbReference type="PDB" id="8I0U">
    <property type="method" value="EM"/>
    <property type="resolution" value="3.30 A"/>
    <property type="chains" value="a/m=1-240"/>
</dbReference>
<dbReference type="PDB" id="8I0V">
    <property type="method" value="EM"/>
    <property type="resolution" value="3.00 A"/>
    <property type="chains" value="a/m=1-240"/>
</dbReference>
<dbReference type="PDB" id="8I0W">
    <property type="method" value="EM"/>
    <property type="resolution" value="3.40 A"/>
    <property type="chains" value="a/i=1-240"/>
</dbReference>
<dbReference type="PDB" id="8Q7Q">
    <property type="method" value="EM"/>
    <property type="resolution" value="3.20 A"/>
    <property type="chains" value="b=1-240"/>
</dbReference>
<dbReference type="PDB" id="8Q7V">
    <property type="method" value="EM"/>
    <property type="resolution" value="3.80 A"/>
    <property type="chains" value="b=1-240"/>
</dbReference>
<dbReference type="PDB" id="8Q7W">
    <property type="method" value="EM"/>
    <property type="resolution" value="3.90 A"/>
    <property type="chains" value="b=1-240"/>
</dbReference>
<dbReference type="PDB" id="8Q7X">
    <property type="method" value="EM"/>
    <property type="resolution" value="4.60 A"/>
    <property type="chains" value="b=1-240"/>
</dbReference>
<dbReference type="PDB" id="8Q91">
    <property type="method" value="EM"/>
    <property type="resolution" value="3.10 A"/>
    <property type="chains" value="h=1-240"/>
</dbReference>
<dbReference type="PDB" id="8QO9">
    <property type="method" value="EM"/>
    <property type="resolution" value="5.29 A"/>
    <property type="chains" value="2b/4b/5b=1-240"/>
</dbReference>
<dbReference type="PDB" id="8QZS">
    <property type="method" value="EM"/>
    <property type="resolution" value="4.10 A"/>
    <property type="chains" value="2b/4b/5b=1-240"/>
</dbReference>
<dbReference type="PDB" id="8R08">
    <property type="method" value="EM"/>
    <property type="resolution" value="6.10 A"/>
    <property type="chains" value="1b/2b/4b/5b=1-240"/>
</dbReference>
<dbReference type="PDB" id="8R09">
    <property type="method" value="EM"/>
    <property type="resolution" value="4.30 A"/>
    <property type="chains" value="2b/4b/5b=1-240"/>
</dbReference>
<dbReference type="PDB" id="8R0A">
    <property type="method" value="EM"/>
    <property type="resolution" value="5.80 A"/>
    <property type="chains" value="2b/4b/5b=1-240"/>
</dbReference>
<dbReference type="PDB" id="8R0B">
    <property type="method" value="EM"/>
    <property type="resolution" value="4.40 A"/>
    <property type="chains" value="2b/4b/5b=1-240"/>
</dbReference>
<dbReference type="PDB" id="8R7N">
    <property type="method" value="EM"/>
    <property type="resolution" value="3.40 A"/>
    <property type="chains" value="k=1-240"/>
</dbReference>
<dbReference type="PDB" id="8RC0">
    <property type="method" value="EM"/>
    <property type="resolution" value="3.20 A"/>
    <property type="chains" value="h=1-240"/>
</dbReference>
<dbReference type="PDB" id="8RM5">
    <property type="method" value="EM"/>
    <property type="resolution" value="6.90 A"/>
    <property type="chains" value="2b/4b/5b=1-240"/>
</dbReference>
<dbReference type="PDB" id="8RO2">
    <property type="method" value="EM"/>
    <property type="resolution" value="3.50 A"/>
    <property type="chains" value="b=1-240"/>
</dbReference>
<dbReference type="PDB" id="8Y6O">
    <property type="method" value="EM"/>
    <property type="resolution" value="3.38 A"/>
    <property type="chains" value="a/h/o=1-240"/>
</dbReference>
<dbReference type="PDB" id="8Y7E">
    <property type="method" value="EM"/>
    <property type="resolution" value="4.66 A"/>
    <property type="chains" value="i=1-240"/>
</dbReference>
<dbReference type="PDB" id="9FMD">
    <property type="method" value="EM"/>
    <property type="resolution" value="3.30 A"/>
    <property type="chains" value="b/i=1-240"/>
</dbReference>
<dbReference type="PDB" id="9GBW">
    <property type="method" value="EM"/>
    <property type="resolution" value="3.50 A"/>
    <property type="chains" value="k=1-240"/>
</dbReference>
<dbReference type="PDB" id="9GC0">
    <property type="method" value="EM"/>
    <property type="resolution" value="3.20 A"/>
    <property type="chains" value="k=1-240"/>
</dbReference>
<dbReference type="PDB" id="9GCL">
    <property type="method" value="EM"/>
    <property type="resolution" value="3.00 A"/>
    <property type="chains" value="k=1-240"/>
</dbReference>
<dbReference type="PDBsum" id="1D3B"/>
<dbReference type="PDBsum" id="3CW1"/>
<dbReference type="PDBsum" id="3JCR"/>
<dbReference type="PDBsum" id="3PGW"/>
<dbReference type="PDBsum" id="4PJO"/>
<dbReference type="PDBsum" id="4WZJ"/>
<dbReference type="PDBsum" id="5MQF"/>
<dbReference type="PDBsum" id="5O9Z"/>
<dbReference type="PDBsum" id="5XJC"/>
<dbReference type="PDBsum" id="5YZG"/>
<dbReference type="PDBsum" id="5Z56"/>
<dbReference type="PDBsum" id="5Z57"/>
<dbReference type="PDBsum" id="5Z58"/>
<dbReference type="PDBsum" id="6AH0"/>
<dbReference type="PDBsum" id="6FF7"/>
<dbReference type="PDBsum" id="6ICZ"/>
<dbReference type="PDBsum" id="6ID0"/>
<dbReference type="PDBsum" id="6ID1"/>
<dbReference type="PDBsum" id="6QDV"/>
<dbReference type="PDBsum" id="6QW6"/>
<dbReference type="PDBsum" id="6QX9"/>
<dbReference type="PDBsum" id="6V4X"/>
<dbReference type="PDBsum" id="6Y53"/>
<dbReference type="PDBsum" id="6Y5Q"/>
<dbReference type="PDBsum" id="7A5P"/>
<dbReference type="PDBsum" id="7ABG"/>
<dbReference type="PDBsum" id="7ABI"/>
<dbReference type="PDBsum" id="7DVQ"/>
<dbReference type="PDBsum" id="7EVO"/>
<dbReference type="PDBsum" id="7QTT"/>
<dbReference type="PDBsum" id="7VPX"/>
<dbReference type="PDBsum" id="7W59"/>
<dbReference type="PDBsum" id="7W5A"/>
<dbReference type="PDBsum" id="7W5B"/>
<dbReference type="PDBsum" id="8C6J"/>
<dbReference type="PDBsum" id="8CH6"/>
<dbReference type="PDBsum" id="8H6E"/>
<dbReference type="PDBsum" id="8H6J"/>
<dbReference type="PDBsum" id="8H6K"/>
<dbReference type="PDBsum" id="8H6L"/>
<dbReference type="PDBsum" id="8HK1"/>
<dbReference type="PDBsum" id="8I0P"/>
<dbReference type="PDBsum" id="8I0R"/>
<dbReference type="PDBsum" id="8I0S"/>
<dbReference type="PDBsum" id="8I0T"/>
<dbReference type="PDBsum" id="8I0U"/>
<dbReference type="PDBsum" id="8I0V"/>
<dbReference type="PDBsum" id="8I0W"/>
<dbReference type="PDBsum" id="8Q7Q"/>
<dbReference type="PDBsum" id="8Q7V"/>
<dbReference type="PDBsum" id="8Q7W"/>
<dbReference type="PDBsum" id="8Q7X"/>
<dbReference type="PDBsum" id="8Q91"/>
<dbReference type="PDBsum" id="8QO9"/>
<dbReference type="PDBsum" id="8QZS"/>
<dbReference type="PDBsum" id="8R08"/>
<dbReference type="PDBsum" id="8R09"/>
<dbReference type="PDBsum" id="8R0A"/>
<dbReference type="PDBsum" id="8R0B"/>
<dbReference type="PDBsum" id="8R7N"/>
<dbReference type="PDBsum" id="8RC0"/>
<dbReference type="PDBsum" id="8RM5"/>
<dbReference type="PDBsum" id="8RO2"/>
<dbReference type="PDBsum" id="8Y6O"/>
<dbReference type="PDBsum" id="8Y7E"/>
<dbReference type="PDBsum" id="9FMD"/>
<dbReference type="PDBsum" id="9GBW"/>
<dbReference type="PDBsum" id="9GC0"/>
<dbReference type="PDBsum" id="9GCL"/>
<dbReference type="EMDB" id="EMD-10689"/>
<dbReference type="EMDB" id="EMD-11695"/>
<dbReference type="EMDB" id="EMD-11697"/>
<dbReference type="EMDB" id="EMD-14146"/>
<dbReference type="EMDB" id="EMD-16452"/>
<dbReference type="EMDB" id="EMD-16658"/>
<dbReference type="EMDB" id="EMD-18229"/>
<dbReference type="EMDB" id="EMD-18234"/>
<dbReference type="EMDB" id="EMD-18235"/>
<dbReference type="EMDB" id="EMD-18237"/>
<dbReference type="EMDB" id="EMD-18267"/>
<dbReference type="EMDB" id="EMD-18529"/>
<dbReference type="EMDB" id="EMD-18718"/>
<dbReference type="EMDB" id="EMD-18781"/>
<dbReference type="EMDB" id="EMD-18786"/>
<dbReference type="EMDB" id="EMD-18787"/>
<dbReference type="EMDB" id="EMD-18788"/>
<dbReference type="EMDB" id="EMD-18789"/>
<dbReference type="EMDB" id="EMD-18984"/>
<dbReference type="EMDB" id="EMD-19041"/>
<dbReference type="EMDB" id="EMD-19349"/>
<dbReference type="EMDB" id="EMD-19399"/>
<dbReference type="EMDB" id="EMD-21050"/>
<dbReference type="EMDB" id="EMD-30875"/>
<dbReference type="EMDB" id="EMD-31334"/>
<dbReference type="EMDB" id="EMD-32074"/>
<dbReference type="EMDB" id="EMD-32317"/>
<dbReference type="EMDB" id="EMD-32319"/>
<dbReference type="EMDB" id="EMD-32321"/>
<dbReference type="EMDB" id="EMD-34500"/>
<dbReference type="EMDB" id="EMD-34505"/>
<dbReference type="EMDB" id="EMD-34507"/>
<dbReference type="EMDB" id="EMD-34508"/>
<dbReference type="EMDB" id="EMD-34841"/>
<dbReference type="EMDB" id="EMD-35105"/>
<dbReference type="EMDB" id="EMD-35107"/>
<dbReference type="EMDB" id="EMD-35108"/>
<dbReference type="EMDB" id="EMD-35109"/>
<dbReference type="EMDB" id="EMD-35110"/>
<dbReference type="EMDB" id="EMD-35111"/>
<dbReference type="EMDB" id="EMD-35113"/>
<dbReference type="EMDB" id="EMD-3545"/>
<dbReference type="EMDB" id="EMD-3766"/>
<dbReference type="EMDB" id="EMD-38993"/>
<dbReference type="EMDB" id="EMD-39013"/>
<dbReference type="EMDB" id="EMD-4525"/>
<dbReference type="EMDB" id="EMD-4658"/>
<dbReference type="EMDB" id="EMD-4665"/>
<dbReference type="EMDB" id="EMD-51223"/>
<dbReference type="EMDB" id="EMD-51226"/>
<dbReference type="EMDB" id="EMD-51233"/>
<dbReference type="EMDB" id="EMD-6721"/>
<dbReference type="EMDB" id="EMD-6864"/>
<dbReference type="EMDB" id="EMD-6889"/>
<dbReference type="EMDB" id="EMD-6890"/>
<dbReference type="EMDB" id="EMD-6891"/>
<dbReference type="EMDB" id="EMD-9621"/>
<dbReference type="EMDB" id="EMD-9624"/>
<dbReference type="SMR" id="P14678"/>
<dbReference type="BioGRID" id="112512">
    <property type="interactions" value="530"/>
</dbReference>
<dbReference type="ComplexPortal" id="CPX-2391">
    <property type="entry name" value="U4/U6.U5 small nuclear ribonucleoprotein complex"/>
</dbReference>
<dbReference type="ComplexPortal" id="CPX-2392">
    <property type="entry name" value="U1 small nuclear ribonucleoprotein complex"/>
</dbReference>
<dbReference type="ComplexPortal" id="CPX-2539">
    <property type="entry name" value="U2 small nuclear ribonucleoprotein complex"/>
</dbReference>
<dbReference type="ComplexPortal" id="CPX-2705">
    <property type="entry name" value="U7 small nuclear ribonucleoprotein complex"/>
</dbReference>
<dbReference type="ComplexPortal" id="CPX-6033">
    <property type="entry name" value="Sm complex"/>
</dbReference>
<dbReference type="CORUM" id="P14678"/>
<dbReference type="DIP" id="DIP-31239N"/>
<dbReference type="FunCoup" id="P14678">
    <property type="interactions" value="2507"/>
</dbReference>
<dbReference type="IntAct" id="P14678">
    <property type="interactions" value="379"/>
</dbReference>
<dbReference type="MINT" id="P14678"/>
<dbReference type="STRING" id="9606.ENSP00000412566"/>
<dbReference type="GlyGen" id="P14678">
    <property type="glycosylation" value="2 sites, 1 O-linked glycan (1 site)"/>
</dbReference>
<dbReference type="iPTMnet" id="P14678"/>
<dbReference type="MetOSite" id="P14678"/>
<dbReference type="PhosphoSitePlus" id="P14678"/>
<dbReference type="SwissPalm" id="P14678"/>
<dbReference type="BioMuta" id="SNRPB"/>
<dbReference type="DMDM" id="134037"/>
<dbReference type="jPOST" id="P14678"/>
<dbReference type="MassIVE" id="P14678"/>
<dbReference type="PaxDb" id="9606-ENSP00000412566"/>
<dbReference type="PeptideAtlas" id="P14678"/>
<dbReference type="ProteomicsDB" id="53074">
    <molecule id="P14678-1"/>
</dbReference>
<dbReference type="ProteomicsDB" id="53075">
    <molecule id="P14678-2"/>
</dbReference>
<dbReference type="ProteomicsDB" id="53076">
    <molecule id="P14678-3"/>
</dbReference>
<dbReference type="Pumba" id="P14678"/>
<dbReference type="TopDownProteomics" id="P14678-2">
    <molecule id="P14678-2"/>
</dbReference>
<dbReference type="Antibodypedia" id="4041">
    <property type="antibodies" value="154 antibodies from 27 providers"/>
</dbReference>
<dbReference type="DNASU" id="6628"/>
<dbReference type="Ensembl" id="ENST00000381342.7">
    <molecule id="P14678-2"/>
    <property type="protein sequence ID" value="ENSP00000370746.3"/>
    <property type="gene ID" value="ENSG00000125835.20"/>
</dbReference>
<dbReference type="Ensembl" id="ENST00000438552.6">
    <molecule id="P14678-1"/>
    <property type="protein sequence ID" value="ENSP00000412566.2"/>
    <property type="gene ID" value="ENSG00000125835.20"/>
</dbReference>
<dbReference type="GeneID" id="6628"/>
<dbReference type="KEGG" id="hsa:6628"/>
<dbReference type="MANE-Select" id="ENST00000381342.7">
    <molecule id="P14678-2"/>
    <property type="protein sequence ID" value="ENSP00000370746.3"/>
    <property type="RefSeq nucleotide sequence ID" value="NM_003091.4"/>
    <property type="RefSeq protein sequence ID" value="NP_003082.1"/>
</dbReference>
<dbReference type="UCSC" id="uc002wfz.2">
    <molecule id="P14678-1"/>
    <property type="organism name" value="human"/>
</dbReference>
<dbReference type="AGR" id="HGNC:11153"/>
<dbReference type="CTD" id="6628"/>
<dbReference type="DisGeNET" id="6628"/>
<dbReference type="GeneCards" id="SNRPB"/>
<dbReference type="HGNC" id="HGNC:11153">
    <property type="gene designation" value="SNRPB"/>
</dbReference>
<dbReference type="HPA" id="ENSG00000125835">
    <property type="expression patterns" value="Low tissue specificity"/>
</dbReference>
<dbReference type="MalaCards" id="SNRPB"/>
<dbReference type="MIM" id="117650">
    <property type="type" value="phenotype"/>
</dbReference>
<dbReference type="MIM" id="182282">
    <property type="type" value="gene"/>
</dbReference>
<dbReference type="neXtProt" id="NX_P14678"/>
<dbReference type="OpenTargets" id="ENSG00000125835"/>
<dbReference type="Orphanet" id="1393">
    <property type="disease" value="Cerebrocostomandibular syndrome"/>
</dbReference>
<dbReference type="PharmGKB" id="PA35995"/>
<dbReference type="VEuPathDB" id="HostDB:ENSG00000125835"/>
<dbReference type="eggNOG" id="KOG3168">
    <property type="taxonomic scope" value="Eukaryota"/>
</dbReference>
<dbReference type="GeneTree" id="ENSGT00940000155052"/>
<dbReference type="HOGENOM" id="CLU_076902_1_0_1"/>
<dbReference type="InParanoid" id="P14678"/>
<dbReference type="OMA" id="KMINYRM"/>
<dbReference type="OrthoDB" id="2020720at2759"/>
<dbReference type="PAN-GO" id="P14678">
    <property type="GO annotations" value="9 GO annotations based on evolutionary models"/>
</dbReference>
<dbReference type="PhylomeDB" id="P14678"/>
<dbReference type="TreeFam" id="TF314232"/>
<dbReference type="PathwayCommons" id="P14678"/>
<dbReference type="Reactome" id="R-HSA-111367">
    <property type="pathway name" value="SLBP independent Processing of Histone Pre-mRNAs"/>
</dbReference>
<dbReference type="Reactome" id="R-HSA-191859">
    <property type="pathway name" value="snRNP Assembly"/>
</dbReference>
<dbReference type="Reactome" id="R-HSA-72163">
    <property type="pathway name" value="mRNA Splicing - Major Pathway"/>
</dbReference>
<dbReference type="Reactome" id="R-HSA-72165">
    <property type="pathway name" value="mRNA Splicing - Minor Pathway"/>
</dbReference>
<dbReference type="Reactome" id="R-HSA-73856">
    <property type="pathway name" value="RNA Polymerase II Transcription Termination"/>
</dbReference>
<dbReference type="Reactome" id="R-HSA-77588">
    <property type="pathway name" value="SLBP Dependent Processing of Replication-Dependent Histone Pre-mRNAs"/>
</dbReference>
<dbReference type="Reactome" id="R-HSA-9754678">
    <property type="pathway name" value="SARS-CoV-2 modulates host translation machinery"/>
</dbReference>
<dbReference type="SignaLink" id="P14678"/>
<dbReference type="SIGNOR" id="P14678"/>
<dbReference type="BioGRID-ORCS" id="6628">
    <property type="hits" value="789 hits in 1162 CRISPR screens"/>
</dbReference>
<dbReference type="CD-CODE" id="91857CE7">
    <property type="entry name" value="Nucleolus"/>
</dbReference>
<dbReference type="ChiTaRS" id="SNRPB">
    <property type="organism name" value="human"/>
</dbReference>
<dbReference type="EvolutionaryTrace" id="P14678"/>
<dbReference type="GeneWiki" id="SNRPB"/>
<dbReference type="GenomeRNAi" id="6628"/>
<dbReference type="Pharos" id="P14678">
    <property type="development level" value="Tbio"/>
</dbReference>
<dbReference type="PRO" id="PR:P14678"/>
<dbReference type="Proteomes" id="UP000005640">
    <property type="component" value="Chromosome 20"/>
</dbReference>
<dbReference type="RNAct" id="P14678">
    <property type="molecule type" value="protein"/>
</dbReference>
<dbReference type="Bgee" id="ENSG00000125835">
    <property type="expression patterns" value="Expressed in endometrium epithelium and 211 other cell types or tissues"/>
</dbReference>
<dbReference type="ExpressionAtlas" id="P14678">
    <property type="expression patterns" value="baseline and differential"/>
</dbReference>
<dbReference type="GO" id="GO:0071013">
    <property type="term" value="C:catalytic step 2 spliceosome"/>
    <property type="evidence" value="ECO:0000314"/>
    <property type="project" value="UniProtKB"/>
</dbReference>
<dbReference type="GO" id="GO:0005737">
    <property type="term" value="C:cytoplasm"/>
    <property type="evidence" value="ECO:0000318"/>
    <property type="project" value="GO_Central"/>
</dbReference>
<dbReference type="GO" id="GO:0005829">
    <property type="term" value="C:cytosol"/>
    <property type="evidence" value="ECO:0000314"/>
    <property type="project" value="UniProtKB"/>
</dbReference>
<dbReference type="GO" id="GO:0071204">
    <property type="term" value="C:histone pre-mRNA 3'end processing complex"/>
    <property type="evidence" value="ECO:0007669"/>
    <property type="project" value="Ensembl"/>
</dbReference>
<dbReference type="GO" id="GO:0034709">
    <property type="term" value="C:methylosome"/>
    <property type="evidence" value="ECO:0000314"/>
    <property type="project" value="UniProtKB"/>
</dbReference>
<dbReference type="GO" id="GO:0005654">
    <property type="term" value="C:nucleoplasm"/>
    <property type="evidence" value="ECO:0000314"/>
    <property type="project" value="HPA"/>
</dbReference>
<dbReference type="GO" id="GO:0005634">
    <property type="term" value="C:nucleus"/>
    <property type="evidence" value="ECO:0000314"/>
    <property type="project" value="UniProtKB"/>
</dbReference>
<dbReference type="GO" id="GO:0030532">
    <property type="term" value="C:small nuclear ribonucleoprotein complex"/>
    <property type="evidence" value="ECO:0000304"/>
    <property type="project" value="ProtInc"/>
</dbReference>
<dbReference type="GO" id="GO:0034719">
    <property type="term" value="C:SMN-Sm protein complex"/>
    <property type="evidence" value="ECO:0000314"/>
    <property type="project" value="UniProtKB"/>
</dbReference>
<dbReference type="GO" id="GO:0005681">
    <property type="term" value="C:spliceosomal complex"/>
    <property type="evidence" value="ECO:0000353"/>
    <property type="project" value="ComplexPortal"/>
</dbReference>
<dbReference type="GO" id="GO:0005697">
    <property type="term" value="C:telomerase holoenzyme complex"/>
    <property type="evidence" value="ECO:0000314"/>
    <property type="project" value="BHF-UCL"/>
</dbReference>
<dbReference type="GO" id="GO:0005685">
    <property type="term" value="C:U1 snRNP"/>
    <property type="evidence" value="ECO:0000314"/>
    <property type="project" value="UniProtKB"/>
</dbReference>
<dbReference type="GO" id="GO:0005689">
    <property type="term" value="C:U12-type spliceosomal complex"/>
    <property type="evidence" value="ECO:0000314"/>
    <property type="project" value="UniProtKB"/>
</dbReference>
<dbReference type="GO" id="GO:0005686">
    <property type="term" value="C:U2 snRNP"/>
    <property type="evidence" value="ECO:0000318"/>
    <property type="project" value="GO_Central"/>
</dbReference>
<dbReference type="GO" id="GO:0071007">
    <property type="term" value="C:U2-type catalytic step 2 spliceosome"/>
    <property type="evidence" value="ECO:0000314"/>
    <property type="project" value="UniProtKB"/>
</dbReference>
<dbReference type="GO" id="GO:0071005">
    <property type="term" value="C:U2-type precatalytic spliceosome"/>
    <property type="evidence" value="ECO:0000314"/>
    <property type="project" value="UniProtKB"/>
</dbReference>
<dbReference type="GO" id="GO:0071004">
    <property type="term" value="C:U2-type prespliceosome"/>
    <property type="evidence" value="ECO:0000318"/>
    <property type="project" value="GO_Central"/>
</dbReference>
<dbReference type="GO" id="GO:0005684">
    <property type="term" value="C:U2-type spliceosomal complex"/>
    <property type="evidence" value="ECO:0000314"/>
    <property type="project" value="UniProtKB"/>
</dbReference>
<dbReference type="GO" id="GO:0005687">
    <property type="term" value="C:U4 snRNP"/>
    <property type="evidence" value="ECO:0000314"/>
    <property type="project" value="UniProtKB"/>
</dbReference>
<dbReference type="GO" id="GO:0046540">
    <property type="term" value="C:U4/U6 x U5 tri-snRNP complex"/>
    <property type="evidence" value="ECO:0000314"/>
    <property type="project" value="UniProtKB"/>
</dbReference>
<dbReference type="GO" id="GO:0005682">
    <property type="term" value="C:U5 snRNP"/>
    <property type="evidence" value="ECO:0000318"/>
    <property type="project" value="GO_Central"/>
</dbReference>
<dbReference type="GO" id="GO:0005683">
    <property type="term" value="C:U7 snRNP"/>
    <property type="evidence" value="ECO:0000314"/>
    <property type="project" value="UniProtKB"/>
</dbReference>
<dbReference type="GO" id="GO:0071208">
    <property type="term" value="F:histone pre-mRNA DCP binding"/>
    <property type="evidence" value="ECO:0007669"/>
    <property type="project" value="Ensembl"/>
</dbReference>
<dbReference type="GO" id="GO:0003723">
    <property type="term" value="F:RNA binding"/>
    <property type="evidence" value="ECO:0000353"/>
    <property type="project" value="BHF-UCL"/>
</dbReference>
<dbReference type="GO" id="GO:0070990">
    <property type="term" value="F:snRNP binding"/>
    <property type="evidence" value="ECO:0000318"/>
    <property type="project" value="GO_Central"/>
</dbReference>
<dbReference type="GO" id="GO:0070034">
    <property type="term" value="F:telomerase RNA binding"/>
    <property type="evidence" value="ECO:0000353"/>
    <property type="project" value="BHF-UCL"/>
</dbReference>
<dbReference type="GO" id="GO:1990446">
    <property type="term" value="F:U1 snRNP binding"/>
    <property type="evidence" value="ECO:0007669"/>
    <property type="project" value="Ensembl"/>
</dbReference>
<dbReference type="GO" id="GO:1990447">
    <property type="term" value="F:U2 snRNP binding"/>
    <property type="evidence" value="ECO:0007669"/>
    <property type="project" value="Ensembl"/>
</dbReference>
<dbReference type="GO" id="GO:0036261">
    <property type="term" value="P:7-methylguanosine cap hypermethylation"/>
    <property type="evidence" value="ECO:0000303"/>
    <property type="project" value="ComplexPortal"/>
</dbReference>
<dbReference type="GO" id="GO:0000398">
    <property type="term" value="P:mRNA splicing, via spliceosome"/>
    <property type="evidence" value="ECO:0000314"/>
    <property type="project" value="UniProtKB"/>
</dbReference>
<dbReference type="GO" id="GO:0006479">
    <property type="term" value="P:protein methylation"/>
    <property type="evidence" value="ECO:0000314"/>
    <property type="project" value="MGI"/>
</dbReference>
<dbReference type="GO" id="GO:0008380">
    <property type="term" value="P:RNA splicing"/>
    <property type="evidence" value="ECO:0000304"/>
    <property type="project" value="ProtInc"/>
</dbReference>
<dbReference type="GO" id="GO:0000387">
    <property type="term" value="P:spliceosomal snRNP assembly"/>
    <property type="evidence" value="ECO:0000314"/>
    <property type="project" value="UniProtKB"/>
</dbReference>
<dbReference type="GO" id="GO:1903241">
    <property type="term" value="P:U2-type prespliceosome assembly"/>
    <property type="evidence" value="ECO:0000303"/>
    <property type="project" value="ComplexPortal"/>
</dbReference>
<dbReference type="CDD" id="cd01717">
    <property type="entry name" value="Sm_B"/>
    <property type="match status" value="1"/>
</dbReference>
<dbReference type="FunFam" id="2.30.30.100:FF:000004">
    <property type="entry name" value="Small nuclear ribonucleoprotein-associated proteins"/>
    <property type="match status" value="1"/>
</dbReference>
<dbReference type="Gene3D" id="2.30.30.100">
    <property type="match status" value="1"/>
</dbReference>
<dbReference type="IDEAL" id="IID00143"/>
<dbReference type="InterPro" id="IPR010920">
    <property type="entry name" value="LSM_dom_sf"/>
</dbReference>
<dbReference type="InterPro" id="IPR047575">
    <property type="entry name" value="Sm"/>
</dbReference>
<dbReference type="InterPro" id="IPR001163">
    <property type="entry name" value="Sm_dom_euk/arc"/>
</dbReference>
<dbReference type="InterPro" id="IPR017131">
    <property type="entry name" value="snRNP-assoc_SmB/SmN"/>
</dbReference>
<dbReference type="PANTHER" id="PTHR14508">
    <property type="entry name" value="SNRPN UPSTREAM READING FRAME PROTEIN, SNURF"/>
    <property type="match status" value="1"/>
</dbReference>
<dbReference type="PANTHER" id="PTHR14508:SF2">
    <property type="entry name" value="SNRPN UPSTREAM READING FRAME PROTEIN-RELATED"/>
    <property type="match status" value="1"/>
</dbReference>
<dbReference type="Pfam" id="PF01423">
    <property type="entry name" value="LSM"/>
    <property type="match status" value="1"/>
</dbReference>
<dbReference type="PIRSF" id="PIRSF037187">
    <property type="entry name" value="snRNP_SmB/SmN"/>
    <property type="match status" value="1"/>
</dbReference>
<dbReference type="SMART" id="SM00651">
    <property type="entry name" value="Sm"/>
    <property type="match status" value="1"/>
</dbReference>
<dbReference type="SUPFAM" id="SSF50182">
    <property type="entry name" value="Sm-like ribonucleoproteins"/>
    <property type="match status" value="1"/>
</dbReference>
<dbReference type="PROSITE" id="PS52002">
    <property type="entry name" value="SM"/>
    <property type="match status" value="1"/>
</dbReference>
<reference key="1">
    <citation type="journal article" date="1989" name="EMBO J.">
        <title>Cloned human snRNP proteins B and B' differ only in their carboxy-terminal part.</title>
        <authorList>
            <person name="van Dam A."/>
            <person name="Winkel I."/>
            <person name="Zijlstra-Baalbergen J."/>
            <person name="Smeenk R."/>
            <person name="Cuypers H.T."/>
        </authorList>
    </citation>
    <scope>NUCLEOTIDE SEQUENCE [MRNA] (ISOFORMS SM-B AND SM-B')</scope>
</reference>
<reference key="2">
    <citation type="journal article" date="1989" name="Nucleic Acids Res.">
        <title>A comparison of snRNP-associated Sm-autoantigens: human N, rat N and human B/B'.</title>
        <authorList>
            <person name="Schmauss C."/>
            <person name="McAllister G."/>
            <person name="Ohosone Y."/>
            <person name="Hardin J.A."/>
            <person name="Lerner M.R."/>
        </authorList>
    </citation>
    <scope>NUCLEOTIDE SEQUENCE [MRNA] (ISOFORMS SM-B)</scope>
    <source>
        <tissue>Thyroid carcinoma</tissue>
    </source>
</reference>
<reference key="3">
    <citation type="journal article" date="1989" name="Nucleic Acids Res.">
        <authorList>
            <person name="Schmauss C."/>
            <person name="McAllister G."/>
            <person name="Ohosone Y."/>
            <person name="Hardin J.A."/>
            <person name="Lerner M.R."/>
        </authorList>
    </citation>
    <scope>ERRATUM OF PUBMED:2522186</scope>
</reference>
<reference key="4">
    <citation type="journal article" date="1989" name="Proc. Natl. Acad. Sci. U.S.A.">
        <title>Molecular cloning of cDNA encoding Sm autoantigen: derivation of a cDNA for a B polypeptide of the U series of small nuclear ribonucleoprotein particles.</title>
        <authorList>
            <person name="Ohosone Y."/>
            <person name="Mimori T."/>
            <person name="Griffith A."/>
            <person name="Akizuki M."/>
            <person name="Homma M."/>
            <person name="Craft J."/>
            <person name="Hardin J.A."/>
        </authorList>
    </citation>
    <scope>NUCLEOTIDE SEQUENCE [MRNA] (ISOFORM SM-B1)</scope>
    <source>
        <tissue>Fibroblast</tissue>
    </source>
</reference>
<reference key="5">
    <citation type="journal article" date="1999" name="Nucleic Acids Res.">
        <title>Concerted regulation and molecular evolution of the duplicated SNRPB'/B and SNRPN loci.</title>
        <authorList>
            <person name="Gray T.A."/>
            <person name="Smithwick M.J."/>
            <person name="Schaldach M.A."/>
            <person name="Martone D.L."/>
            <person name="Graves J.A."/>
            <person name="McCarrey J.R."/>
            <person name="Nicholls R.D."/>
        </authorList>
    </citation>
    <scope>NUCLEOTIDE SEQUENCE [GENOMIC DNA]</scope>
</reference>
<reference key="6">
    <citation type="submission" date="2004-06" db="EMBL/GenBank/DDBJ databases">
        <title>Cloning of human full open reading frames in Gateway(TM) system entry vector (pDONR201).</title>
        <authorList>
            <person name="Ebert L."/>
            <person name="Schick M."/>
            <person name="Neubert P."/>
            <person name="Schatten R."/>
            <person name="Henze S."/>
            <person name="Korn B."/>
        </authorList>
    </citation>
    <scope>NUCLEOTIDE SEQUENCE [LARGE SCALE MRNA] (ISOFORM SM-B')</scope>
</reference>
<reference key="7">
    <citation type="journal article" date="2001" name="Nature">
        <title>The DNA sequence and comparative analysis of human chromosome 20.</title>
        <authorList>
            <person name="Deloukas P."/>
            <person name="Matthews L.H."/>
            <person name="Ashurst J.L."/>
            <person name="Burton J."/>
            <person name="Gilbert J.G.R."/>
            <person name="Jones M."/>
            <person name="Stavrides G."/>
            <person name="Almeida J.P."/>
            <person name="Babbage A.K."/>
            <person name="Bagguley C.L."/>
            <person name="Bailey J."/>
            <person name="Barlow K.F."/>
            <person name="Bates K.N."/>
            <person name="Beard L.M."/>
            <person name="Beare D.M."/>
            <person name="Beasley O.P."/>
            <person name="Bird C.P."/>
            <person name="Blakey S.E."/>
            <person name="Bridgeman A.M."/>
            <person name="Brown A.J."/>
            <person name="Buck D."/>
            <person name="Burrill W.D."/>
            <person name="Butler A.P."/>
            <person name="Carder C."/>
            <person name="Carter N.P."/>
            <person name="Chapman J.C."/>
            <person name="Clamp M."/>
            <person name="Clark G."/>
            <person name="Clark L.N."/>
            <person name="Clark S.Y."/>
            <person name="Clee C.M."/>
            <person name="Clegg S."/>
            <person name="Cobley V.E."/>
            <person name="Collier R.E."/>
            <person name="Connor R.E."/>
            <person name="Corby N.R."/>
            <person name="Coulson A."/>
            <person name="Coville G.J."/>
            <person name="Deadman R."/>
            <person name="Dhami P.D."/>
            <person name="Dunn M."/>
            <person name="Ellington A.G."/>
            <person name="Frankland J.A."/>
            <person name="Fraser A."/>
            <person name="French L."/>
            <person name="Garner P."/>
            <person name="Grafham D.V."/>
            <person name="Griffiths C."/>
            <person name="Griffiths M.N.D."/>
            <person name="Gwilliam R."/>
            <person name="Hall R.E."/>
            <person name="Hammond S."/>
            <person name="Harley J.L."/>
            <person name="Heath P.D."/>
            <person name="Ho S."/>
            <person name="Holden J.L."/>
            <person name="Howden P.J."/>
            <person name="Huckle E."/>
            <person name="Hunt A.R."/>
            <person name="Hunt S.E."/>
            <person name="Jekosch K."/>
            <person name="Johnson C.M."/>
            <person name="Johnson D."/>
            <person name="Kay M.P."/>
            <person name="Kimberley A.M."/>
            <person name="King A."/>
            <person name="Knights A."/>
            <person name="Laird G.K."/>
            <person name="Lawlor S."/>
            <person name="Lehvaeslaiho M.H."/>
            <person name="Leversha M.A."/>
            <person name="Lloyd C."/>
            <person name="Lloyd D.M."/>
            <person name="Lovell J.D."/>
            <person name="Marsh V.L."/>
            <person name="Martin S.L."/>
            <person name="McConnachie L.J."/>
            <person name="McLay K."/>
            <person name="McMurray A.A."/>
            <person name="Milne S.A."/>
            <person name="Mistry D."/>
            <person name="Moore M.J.F."/>
            <person name="Mullikin J.C."/>
            <person name="Nickerson T."/>
            <person name="Oliver K."/>
            <person name="Parker A."/>
            <person name="Patel R."/>
            <person name="Pearce T.A.V."/>
            <person name="Peck A.I."/>
            <person name="Phillimore B.J.C.T."/>
            <person name="Prathalingam S.R."/>
            <person name="Plumb R.W."/>
            <person name="Ramsay H."/>
            <person name="Rice C.M."/>
            <person name="Ross M.T."/>
            <person name="Scott C.E."/>
            <person name="Sehra H.K."/>
            <person name="Shownkeen R."/>
            <person name="Sims S."/>
            <person name="Skuce C.D."/>
            <person name="Smith M.L."/>
            <person name="Soderlund C."/>
            <person name="Steward C.A."/>
            <person name="Sulston J.E."/>
            <person name="Swann R.M."/>
            <person name="Sycamore N."/>
            <person name="Taylor R."/>
            <person name="Tee L."/>
            <person name="Thomas D.W."/>
            <person name="Thorpe A."/>
            <person name="Tracey A."/>
            <person name="Tromans A.C."/>
            <person name="Vaudin M."/>
            <person name="Wall M."/>
            <person name="Wallis J.M."/>
            <person name="Whitehead S.L."/>
            <person name="Whittaker P."/>
            <person name="Willey D.L."/>
            <person name="Williams L."/>
            <person name="Williams S.A."/>
            <person name="Wilming L."/>
            <person name="Wray P.W."/>
            <person name="Hubbard T."/>
            <person name="Durbin R.M."/>
            <person name="Bentley D.R."/>
            <person name="Beck S."/>
            <person name="Rogers J."/>
        </authorList>
    </citation>
    <scope>NUCLEOTIDE SEQUENCE [LARGE SCALE GENOMIC DNA]</scope>
</reference>
<reference key="8">
    <citation type="submission" date="2005-09" db="EMBL/GenBank/DDBJ databases">
        <authorList>
            <person name="Mural R.J."/>
            <person name="Istrail S."/>
            <person name="Sutton G.G."/>
            <person name="Florea L."/>
            <person name="Halpern A.L."/>
            <person name="Mobarry C.M."/>
            <person name="Lippert R."/>
            <person name="Walenz B."/>
            <person name="Shatkay H."/>
            <person name="Dew I."/>
            <person name="Miller J.R."/>
            <person name="Flanigan M.J."/>
            <person name="Edwards N.J."/>
            <person name="Bolanos R."/>
            <person name="Fasulo D."/>
            <person name="Halldorsson B.V."/>
            <person name="Hannenhalli S."/>
            <person name="Turner R."/>
            <person name="Yooseph S."/>
            <person name="Lu F."/>
            <person name="Nusskern D.R."/>
            <person name="Shue B.C."/>
            <person name="Zheng X.H."/>
            <person name="Zhong F."/>
            <person name="Delcher A.L."/>
            <person name="Huson D.H."/>
            <person name="Kravitz S.A."/>
            <person name="Mouchard L."/>
            <person name="Reinert K."/>
            <person name="Remington K.A."/>
            <person name="Clark A.G."/>
            <person name="Waterman M.S."/>
            <person name="Eichler E.E."/>
            <person name="Adams M.D."/>
            <person name="Hunkapiller M.W."/>
            <person name="Myers E.W."/>
            <person name="Venter J.C."/>
        </authorList>
    </citation>
    <scope>NUCLEOTIDE SEQUENCE [LARGE SCALE GENOMIC DNA]</scope>
</reference>
<reference key="9">
    <citation type="journal article" date="1990" name="J. Immunol.">
        <title>Epitope mapping of recombinant HeLa SmB and B' peptides obtained by the polymerase chain reaction.</title>
        <authorList>
            <person name="Elkon K.B."/>
            <person name="Hines J.J."/>
            <person name="Chu J.-L."/>
            <person name="Parnassa A."/>
        </authorList>
    </citation>
    <scope>NUCLEOTIDE SEQUENCE [MRNA] OF 8-240 (ISOFORMS SM-B AND SM-B')</scope>
</reference>
<reference key="10">
    <citation type="submission" date="2008-12" db="UniProtKB">
        <authorList>
            <person name="Bienvenut W.V."/>
            <person name="Lilla S."/>
            <person name="von Kriegsheim A."/>
            <person name="Lempens A."/>
            <person name="Kolch W."/>
        </authorList>
    </citation>
    <scope>PROTEIN SEQUENCE OF 9-16; 19-32 AND 66-147</scope>
    <scope>METHYLATION AT ARG-108; ARG-112 AND ARG-147</scope>
    <scope>IDENTIFICATION BY MASS SPECTROMETRY</scope>
    <source>
        <tissue>Ovarian carcinoma</tissue>
    </source>
</reference>
<reference key="11">
    <citation type="journal article" date="1991" name="Gene">
        <title>The small nuclear ribonucleoproteins, SmB and B', are products of a single gene.</title>
        <authorList>
            <person name="Chu J.-L."/>
            <person name="Elkon K.B."/>
        </authorList>
    </citation>
    <scope>NUCLEOTIDE SEQUENCE [MRNA] OF 209-240</scope>
</reference>
<reference key="12">
    <citation type="journal article" date="1999" name="Proc. Natl. Acad. Sci. U.S.A.">
        <title>SMN mutants of spinal muscular atrophy patients are defective in binding to snRNP proteins.</title>
        <authorList>
            <person name="Pellizzoni L."/>
            <person name="Charroux B."/>
            <person name="Dreyfuss G."/>
        </authorList>
    </citation>
    <scope>INTERACTION WITH SMN1</scope>
</reference>
<reference key="13">
    <citation type="journal article" date="2001" name="EMBO J.">
        <title>Purified U7 snRNPs lack the Sm proteins D1 and D2 but contain Lsm10, a new 14 kDa Sm D1-like protein.</title>
        <authorList>
            <person name="Pillai R.S."/>
            <person name="Will C.L."/>
            <person name="Luehrmann R."/>
            <person name="Schuemperli D."/>
            <person name="Mueller B."/>
        </authorList>
    </citation>
    <scope>IDENTIFICATION IN THE U7 SNRNP COMPLEX</scope>
    <scope>SUBUNIT</scope>
    <scope>SUBCELLULAR LOCATION</scope>
</reference>
<reference key="14">
    <citation type="journal article" date="2002" name="Hum. Mol. Genet.">
        <title>SMN, the spinal muscular atrophy protein, forms a pre-import snRNP complex with snurportin1 and importin beta.</title>
        <authorList>
            <person name="Narayanan U."/>
            <person name="Ospina J.K."/>
            <person name="Frey M.R."/>
            <person name="Hebert M.D."/>
            <person name="Matera A.G."/>
        </authorList>
    </citation>
    <scope>INTERACTION WITH DDX20; SNUPN AND SMN1</scope>
</reference>
<reference key="15">
    <citation type="journal article" date="2002" name="RNA">
        <title>Purification and characterization of native spliceosomes suitable for three-dimensional structural analysis.</title>
        <authorList>
            <person name="Jurica M.S."/>
            <person name="Licklider L.J."/>
            <person name="Gygi S.P."/>
            <person name="Grigorieff N."/>
            <person name="Moore M.J."/>
        </authorList>
    </citation>
    <scope>IDENTIFICATION BY MASS SPECTROMETRY</scope>
    <scope>IDENTIFICATION IN THE SPLICEOSOMAL C COMPLEX</scope>
    <scope>FUNCTION</scope>
    <scope>SUBCELLULAR LOCATION</scope>
    <scope>SUBUNIT</scope>
</reference>
<reference key="16">
    <citation type="journal article" date="2003" name="Genes Dev.">
        <title>Unique Sm core structure of U7 snRNPs: assembly by a specialized SMN complex and the role of a new component, Lsm11, in histone RNA processing.</title>
        <authorList>
            <person name="Pillai R.S."/>
            <person name="Grimmler M."/>
            <person name="Meister G."/>
            <person name="Will C.L."/>
            <person name="Luehrmann R."/>
            <person name="Fischer U."/>
            <person name="Schuemperli D."/>
        </authorList>
    </citation>
    <scope>INTERACTION WITH LSM11</scope>
    <scope>SUBUNIT</scope>
    <scope>FUNCTION</scope>
    <source>
        <tissue>Cervix carcinoma</tissue>
    </source>
</reference>
<reference key="17">
    <citation type="journal article" date="2004" name="RNA">
        <title>The human 18S U11/U12 snRNP contains a set of novel proteins not found in the U2-dependent spliceosome.</title>
        <authorList>
            <person name="Will C.L."/>
            <person name="Schneider C."/>
            <person name="Hossbach M."/>
            <person name="Urlaub H."/>
            <person name="Rauhut R."/>
            <person name="Elbashir S."/>
            <person name="Tuschl T."/>
            <person name="Luehrmann R."/>
        </authorList>
    </citation>
    <scope>IDENTIFICATION IN A COMPLEX WITH THE MINOR SPLICEOSOME</scope>
    <scope>IDENTIFICATION BY MASS SPECTROMETRY</scope>
</reference>
<reference key="18">
    <citation type="journal article" date="2005" name="J. Biol. Chem.">
        <title>Tudor domains bind symmetrical dimethylated arginines.</title>
        <authorList>
            <person name="Cote J."/>
            <person name="Richard S."/>
        </authorList>
    </citation>
    <scope>INTERACTION WITH TDRD3</scope>
</reference>
<reference key="19">
    <citation type="journal article" date="2005" name="J. Biol. Chem.">
        <title>Toward an assembly line for U7 snRNPs: interactions of U7-specific Lsm proteins with PRMT5 and SMN complexes.</title>
        <authorList>
            <person name="Azzouz T.N."/>
            <person name="Pillai R.S."/>
            <person name="Dapp C."/>
            <person name="Chari A."/>
            <person name="Meister G."/>
            <person name="Kambach C."/>
            <person name="Fischer U."/>
            <person name="Schuemperli D."/>
        </authorList>
    </citation>
    <scope>INTERACTION WITH CLNS1A AND SMN</scope>
    <scope>METHYLATION</scope>
</reference>
<reference key="20">
    <citation type="journal article" date="2005" name="Mol. Cell. Biol.">
        <title>Specific sequence features, recognized by the SMN complex, identify snRNAs and determine their fate as snRNPs.</title>
        <authorList>
            <person name="Golembe T.J."/>
            <person name="Yong J."/>
            <person name="Dreyfuss G."/>
        </authorList>
    </citation>
    <scope>IDENTIFICATION IN THE SMN-SM COMPLEX</scope>
</reference>
<reference key="21">
    <citation type="journal article" date="2008" name="Cell">
        <title>An assembly chaperone collaborates with the SMN complex to generate spliceosomal SnRNPs.</title>
        <authorList>
            <person name="Chari A."/>
            <person name="Golas M.M."/>
            <person name="Klingenhager M."/>
            <person name="Neuenkirchen N."/>
            <person name="Sander B."/>
            <person name="Englbrecht C."/>
            <person name="Sickmann A."/>
            <person name="Stark H."/>
            <person name="Fischer U."/>
        </authorList>
    </citation>
    <scope>FUNCTION IN SNRNP BIOGENESIS</scope>
    <scope>IDENTIFICATION IN 6S PICLN-SM COMPLEX</scope>
    <scope>IDENTIFICATION IN SMN-SM COMPLEX</scope>
    <scope>SUBCELLULAR LOCATION</scope>
</reference>
<reference key="22">
    <citation type="journal article" date="2011" name="BMC Syst. Biol.">
        <title>Initial characterization of the human central proteome.</title>
        <authorList>
            <person name="Burkard T.R."/>
            <person name="Planyavsky M."/>
            <person name="Kaupe I."/>
            <person name="Breitwieser F.P."/>
            <person name="Buerckstuemmer T."/>
            <person name="Bennett K.L."/>
            <person name="Superti-Furga G."/>
            <person name="Colinge J."/>
        </authorList>
    </citation>
    <scope>IDENTIFICATION BY MASS SPECTROMETRY [LARGE SCALE ANALYSIS]</scope>
</reference>
<reference key="23">
    <citation type="journal article" date="2014" name="Mol. Cell. Proteomics">
        <title>Immunoaffinity enrichment and mass spectrometry analysis of protein methylation.</title>
        <authorList>
            <person name="Guo A."/>
            <person name="Gu H."/>
            <person name="Zhou J."/>
            <person name="Mulhern D."/>
            <person name="Wang Y."/>
            <person name="Lee K.A."/>
            <person name="Yang V."/>
            <person name="Aguiar M."/>
            <person name="Kornhauser J."/>
            <person name="Jia X."/>
            <person name="Ren J."/>
            <person name="Beausoleil S.A."/>
            <person name="Silva J.C."/>
            <person name="Vemulapalli V."/>
            <person name="Bedford M.T."/>
            <person name="Comb M.J."/>
        </authorList>
    </citation>
    <scope>METHYLATION [LARGE SCALE ANALYSIS] AT ARG-108 AND ARG-112</scope>
    <scope>IDENTIFICATION BY MASS SPECTROMETRY [LARGE SCALE ANALYSIS]</scope>
    <source>
        <tissue>Colon carcinoma</tissue>
    </source>
</reference>
<reference key="24">
    <citation type="journal article" date="2014" name="Nat. Commun.">
        <title>Disrupted auto-regulation of the spliceosomal gene SNRPB causes cerebro-costo-mandibular syndrome.</title>
        <authorList>
            <consortium name="Care4Rare Canada"/>
            <person name="Lynch D.C."/>
            <person name="Revil T."/>
            <person name="Schwartzentruber J."/>
            <person name="Bhoj E.J."/>
            <person name="Innes A.M."/>
            <person name="Lamont R.E."/>
            <person name="Lemire E.G."/>
            <person name="Chodirker B.N."/>
            <person name="Taylor J.P."/>
            <person name="Zackai E.H."/>
            <person name="McLeod D.R."/>
            <person name="Kirk E.P."/>
            <person name="Hoover-Fong J."/>
            <person name="Fleming L."/>
            <person name="Savarirayan R."/>
            <person name="Majewski J."/>
            <person name="Jerome-Majewska L.A."/>
            <person name="Parboosingh J.S."/>
            <person name="Bernier F.P."/>
        </authorList>
    </citation>
    <scope>INVOLVEMENT IN CCMS</scope>
    <scope>VARIANTS CCMS SER-55; ARG-56 AND TRP-56</scope>
    <scope>CHARACTERIZATION OF VARIANTS CCMS SER-55</scope>
</reference>
<reference key="25">
    <citation type="journal article" date="2015" name="Hum. Mutat.">
        <title>Mutations in SNRPB, encoding components of the core splicing machinery, cause cerebro-costo-mandibular syndrome.</title>
        <authorList>
            <person name="Bacrot S."/>
            <person name="Doyard M."/>
            <person name="Huber C."/>
            <person name="Alibeu O."/>
            <person name="Feldhahn N."/>
            <person name="Lehalle D."/>
            <person name="Lacombe D."/>
            <person name="Marlin S."/>
            <person name="Nitschke P."/>
            <person name="Petit F."/>
            <person name="Vazquez M.P."/>
            <person name="Munnich A."/>
            <person name="Cormier-Daire V."/>
        </authorList>
    </citation>
    <scope>INVOLVEMENT IN CCMS</scope>
    <scope>VARIANTS CCMS SER-55; THR-55 AND ARG-56</scope>
</reference>
<reference key="26">
    <citation type="journal article" date="1999" name="Cell">
        <title>Crystal structures of two Sm protein complexes and their implications for the assembly of the spliceosomal snRNPs.</title>
        <authorList>
            <person name="Kambach C."/>
            <person name="Walke S."/>
            <person name="Young R."/>
            <person name="Avis J.M."/>
            <person name="de la Fortelle E."/>
            <person name="Raker V.A."/>
            <person name="Luehrmann R."/>
            <person name="Li J."/>
            <person name="Nagai K."/>
        </authorList>
    </citation>
    <scope>X-RAY CRYSTALLOGRAPHY (2.0 ANGSTROMS)</scope>
</reference>
<reference key="27">
    <citation type="journal article" date="2009" name="Nature">
        <title>Crystal structure of human spliceosomal U1 snRNP at 5.5 A resolution.</title>
        <authorList>
            <person name="Pomeranz Krummel D.A."/>
            <person name="Oubridge C."/>
            <person name="Leung A.K."/>
            <person name="Li J."/>
            <person name="Nagai K."/>
        </authorList>
    </citation>
    <scope>X-RAY CRYSTALLOGRAPHY (5.49 ANGSTROMS) OF 1-174 IN SPLICEOSOMAL U1 SNRNP</scope>
    <scope>FUNCTION</scope>
    <scope>SUBUNIT</scope>
</reference>
<reference key="28">
    <citation type="journal article" date="2011" name="Nature">
        <title>Structure of the spliceosomal U4 snRNP core domain and its implication for snRNP biogenesis.</title>
        <authorList>
            <person name="Leung A.K."/>
            <person name="Nagai K."/>
            <person name="Li J."/>
        </authorList>
    </citation>
    <scope>X-RAY CRYSTALLOGRAPHY (3.60 ANGSTROMS) OF 1-95 IN SPLICEOSOMAL CORE U4 SNRNP</scope>
    <scope>SUBUNIT</scope>
</reference>
<reference evidence="34" key="29">
    <citation type="journal article" date="2015" name="Elife">
        <title>Crystal structure of human U1 snRNP, a small nuclear ribonucleoprotein particle, reveals the mechanism of 5' splice site recognition.</title>
        <authorList>
            <person name="Kondo Y."/>
            <person name="Oubridge C."/>
            <person name="van Roon A.M."/>
            <person name="Nagai K."/>
        </authorList>
    </citation>
    <scope>X-RAY CRYSTALLOGRAPHY (3.30 ANGSTROMS) OF 1-95</scope>
    <scope>SUBUNIT</scope>
</reference>
<reference evidence="33" key="30">
    <citation type="journal article" date="2016" name="Science">
        <title>Molecular architecture of the human U4/U6.U5 tri-snRNP.</title>
        <authorList>
            <person name="Agafonov D.E."/>
            <person name="Kastner B."/>
            <person name="Dybkov O."/>
            <person name="Hofele R.V."/>
            <person name="Liu W.T."/>
            <person name="Urlaub H."/>
            <person name="Luhrmann R."/>
            <person name="Stark H."/>
        </authorList>
    </citation>
    <scope>STRUCTURE BY ELECTRON MICROSCOPY (7.00 ANGSTROMS)</scope>
    <scope>SUBCELLULAR LOCATION</scope>
    <scope>SUBUNIT</scope>
    <scope>IDENTIFICATION BY MASS SPECTROMETRY</scope>
</reference>
<reference evidence="37" key="31">
    <citation type="journal article" date="2017" name="Cell">
        <title>An Atomic Structure of the Human Spliceosome.</title>
        <authorList>
            <person name="Zhang X."/>
            <person name="Yan C."/>
            <person name="Hang J."/>
            <person name="Finci L.I."/>
            <person name="Lei J."/>
            <person name="Shi Y."/>
        </authorList>
    </citation>
    <scope>STRUCTURE BY ELECTRON MICROSCOPY (3.60 ANGSTROMS) OF 1-229</scope>
    <scope>FUNCTION</scope>
    <scope>SUBCELLULAR LOCATION</scope>
    <scope>SUBUNIT</scope>
</reference>
<reference evidence="36" key="32">
    <citation type="journal article" date="2017" name="Cell">
        <title>Cryo-EM Structure of a Pre-catalytic Human Spliceosome Primed for Activation.</title>
        <authorList>
            <person name="Bertram K."/>
            <person name="Agafonov D.E."/>
            <person name="Dybkov O."/>
            <person name="Haselbach D."/>
            <person name="Leelaram M.N."/>
            <person name="Will C.L."/>
            <person name="Urlaub H."/>
            <person name="Kastner B."/>
            <person name="Luhrmann R."/>
            <person name="Stark H."/>
        </authorList>
    </citation>
    <scope>STRUCTURE BY ELECTRON MICROSCOPY (4.50 ANGSTROMS)</scope>
    <scope>FUNCTION</scope>
    <scope>SUBCELLULAR LOCATION</scope>
    <scope>SUBUNIT</scope>
    <scope>IDENTIFICATION BY MASS SPECTROMETRY</scope>
</reference>
<reference evidence="35" key="33">
    <citation type="journal article" date="2017" name="Nature">
        <title>Cryo-EM structure of a human spliceosome activated for step 2 of splicing.</title>
        <authorList>
            <person name="Bertram K."/>
            <person name="Agafonov D.E."/>
            <person name="Liu W.T."/>
            <person name="Dybkov O."/>
            <person name="Will C.L."/>
            <person name="Hartmuth K."/>
            <person name="Urlaub H."/>
            <person name="Kastner B."/>
            <person name="Stark H."/>
            <person name="Luhrmann R."/>
        </authorList>
    </citation>
    <scope>STRUCTURE BY ELECTRON MICROSCOPY (5.90 ANGSTROMS)</scope>
    <scope>FUNCTION</scope>
    <scope>SUBCELLULAR LOCATION</scope>
    <scope>SUBUNIT</scope>
    <scope>IDENTIFICATION BY MASS SPECTROMETRY</scope>
</reference>
<reference evidence="38" key="34">
    <citation type="journal article" date="2020" name="Nature">
        <title>Molecular architecture of the human 17S U2 snRNP.</title>
        <authorList>
            <person name="Zhang Z."/>
            <person name="Will C.L."/>
            <person name="Bertram K."/>
            <person name="Dybkov O."/>
            <person name="Hartmuth K."/>
            <person name="Agafonov D.E."/>
            <person name="Hofele R."/>
            <person name="Urlaub H."/>
            <person name="Kastner B."/>
            <person name="Luehrmann R."/>
            <person name="Stark H."/>
        </authorList>
    </citation>
    <scope>STRUCTURE BY ELECTRON MICROSCOPY (4.10 ANGSTROMS) IN COMPLEX WITH THE 17S U2 SNRNP COMPLEX</scope>
    <scope>FUNCTION</scope>
    <scope>IDENTIFICATION IN THE 17S U2 SNRNP COMPLEX</scope>
</reference>
<reference evidence="39" key="35">
    <citation type="journal article" date="2021" name="Science">
        <title>Structure of the activated human minor spliceosome.</title>
        <authorList>
            <person name="Bai R."/>
            <person name="Wan R."/>
            <person name="Wang L."/>
            <person name="Xu K."/>
            <person name="Zhang Q."/>
            <person name="Lei J."/>
            <person name="Shi Y."/>
        </authorList>
    </citation>
    <scope>STRUCTURE BY ELECTRON MICROSCOPY (2.89 ANGSTROMS)</scope>
    <scope>SUBUNIT</scope>
</reference>
<reference evidence="40" key="36">
    <citation type="journal article" date="2023" name="Nat. Commun.">
        <title>Mechanisms of the RNA helicases DDX42 and DDX46 in human U2 snRNP assembly.</title>
        <authorList>
            <person name="Yang F."/>
            <person name="Bian T."/>
            <person name="Zhan X."/>
            <person name="Chen Z."/>
            <person name="Xing Z."/>
            <person name="Larsen N.A."/>
            <person name="Zhang X."/>
            <person name="Shi Y."/>
        </authorList>
    </citation>
    <scope>STRUCTURE BY ELECTRON MICROSCOPY (2.70 ANGSTROMS) IN COMPLEX WITH THE 17S U2 SNRNP COMPLEX</scope>
    <scope>IDENTIFICATION IN THE 17S U2 SNRNP COMPLEX</scope>
</reference>
<organism>
    <name type="scientific">Homo sapiens</name>
    <name type="common">Human</name>
    <dbReference type="NCBI Taxonomy" id="9606"/>
    <lineage>
        <taxon>Eukaryota</taxon>
        <taxon>Metazoa</taxon>
        <taxon>Chordata</taxon>
        <taxon>Craniata</taxon>
        <taxon>Vertebrata</taxon>
        <taxon>Euteleostomi</taxon>
        <taxon>Mammalia</taxon>
        <taxon>Eutheria</taxon>
        <taxon>Euarchontoglires</taxon>
        <taxon>Primates</taxon>
        <taxon>Haplorrhini</taxon>
        <taxon>Catarrhini</taxon>
        <taxon>Hominidae</taxon>
        <taxon>Homo</taxon>
    </lineage>
</organism>